<proteinExistence type="evidence at protein level"/>
<accession>P27694</accession>
<accession>A8K0Y9</accession>
<accession>Q59ES9</accession>
<reference key="1">
    <citation type="journal article" date="1991" name="J. Biol. Chem.">
        <title>Characterization of a cDNA encoding the 70-kDa single-stranded DNA-binding subunit of human replication protein A and the role of the protein in DNA replication.</title>
        <authorList>
            <person name="Erdile L.F."/>
            <person name="Heyer W.-D."/>
            <person name="Kolodner R."/>
            <person name="Kelly T.J."/>
        </authorList>
    </citation>
    <scope>NUCLEOTIDE SEQUENCE [MRNA]</scope>
    <scope>PARTIAL PROTEIN SEQUENCE</scope>
</reference>
<reference key="2">
    <citation type="journal article" date="1993" name="J. Biol. Chem.">
        <title>Type I human complement C2 deficiency. A 28-base pair gene deletion causes skipping of exon 6 during RNA splicing.</title>
        <authorList>
            <person name="Erdile L.F."/>
            <person name="Heyer W.-D."/>
            <person name="Kolodner R."/>
            <person name="Kelly T.J."/>
        </authorList>
    </citation>
    <scope>SEQUENCE REVISION TO 217</scope>
</reference>
<reference key="3">
    <citation type="journal article" date="2004" name="Nat. Genet.">
        <title>Complete sequencing and characterization of 21,243 full-length human cDNAs.</title>
        <authorList>
            <person name="Ota T."/>
            <person name="Suzuki Y."/>
            <person name="Nishikawa T."/>
            <person name="Otsuki T."/>
            <person name="Sugiyama T."/>
            <person name="Irie R."/>
            <person name="Wakamatsu A."/>
            <person name="Hayashi K."/>
            <person name="Sato H."/>
            <person name="Nagai K."/>
            <person name="Kimura K."/>
            <person name="Makita H."/>
            <person name="Sekine M."/>
            <person name="Obayashi M."/>
            <person name="Nishi T."/>
            <person name="Shibahara T."/>
            <person name="Tanaka T."/>
            <person name="Ishii S."/>
            <person name="Yamamoto J."/>
            <person name="Saito K."/>
            <person name="Kawai Y."/>
            <person name="Isono Y."/>
            <person name="Nakamura Y."/>
            <person name="Nagahari K."/>
            <person name="Murakami K."/>
            <person name="Yasuda T."/>
            <person name="Iwayanagi T."/>
            <person name="Wagatsuma M."/>
            <person name="Shiratori A."/>
            <person name="Sudo H."/>
            <person name="Hosoiri T."/>
            <person name="Kaku Y."/>
            <person name="Kodaira H."/>
            <person name="Kondo H."/>
            <person name="Sugawara M."/>
            <person name="Takahashi M."/>
            <person name="Kanda K."/>
            <person name="Yokoi T."/>
            <person name="Furuya T."/>
            <person name="Kikkawa E."/>
            <person name="Omura Y."/>
            <person name="Abe K."/>
            <person name="Kamihara K."/>
            <person name="Katsuta N."/>
            <person name="Sato K."/>
            <person name="Tanikawa M."/>
            <person name="Yamazaki M."/>
            <person name="Ninomiya K."/>
            <person name="Ishibashi T."/>
            <person name="Yamashita H."/>
            <person name="Murakawa K."/>
            <person name="Fujimori K."/>
            <person name="Tanai H."/>
            <person name="Kimata M."/>
            <person name="Watanabe M."/>
            <person name="Hiraoka S."/>
            <person name="Chiba Y."/>
            <person name="Ishida S."/>
            <person name="Ono Y."/>
            <person name="Takiguchi S."/>
            <person name="Watanabe S."/>
            <person name="Yosida M."/>
            <person name="Hotuta T."/>
            <person name="Kusano J."/>
            <person name="Kanehori K."/>
            <person name="Takahashi-Fujii A."/>
            <person name="Hara H."/>
            <person name="Tanase T.-O."/>
            <person name="Nomura Y."/>
            <person name="Togiya S."/>
            <person name="Komai F."/>
            <person name="Hara R."/>
            <person name="Takeuchi K."/>
            <person name="Arita M."/>
            <person name="Imose N."/>
            <person name="Musashino K."/>
            <person name="Yuuki H."/>
            <person name="Oshima A."/>
            <person name="Sasaki N."/>
            <person name="Aotsuka S."/>
            <person name="Yoshikawa Y."/>
            <person name="Matsunawa H."/>
            <person name="Ichihara T."/>
            <person name="Shiohata N."/>
            <person name="Sano S."/>
            <person name="Moriya S."/>
            <person name="Momiyama H."/>
            <person name="Satoh N."/>
            <person name="Takami S."/>
            <person name="Terashima Y."/>
            <person name="Suzuki O."/>
            <person name="Nakagawa S."/>
            <person name="Senoh A."/>
            <person name="Mizoguchi H."/>
            <person name="Goto Y."/>
            <person name="Shimizu F."/>
            <person name="Wakebe H."/>
            <person name="Hishigaki H."/>
            <person name="Watanabe T."/>
            <person name="Sugiyama A."/>
            <person name="Takemoto M."/>
            <person name="Kawakami B."/>
            <person name="Yamazaki M."/>
            <person name="Watanabe K."/>
            <person name="Kumagai A."/>
            <person name="Itakura S."/>
            <person name="Fukuzumi Y."/>
            <person name="Fujimori Y."/>
            <person name="Komiyama M."/>
            <person name="Tashiro H."/>
            <person name="Tanigami A."/>
            <person name="Fujiwara T."/>
            <person name="Ono T."/>
            <person name="Yamada K."/>
            <person name="Fujii Y."/>
            <person name="Ozaki K."/>
            <person name="Hirao M."/>
            <person name="Ohmori Y."/>
            <person name="Kawabata A."/>
            <person name="Hikiji T."/>
            <person name="Kobatake N."/>
            <person name="Inagaki H."/>
            <person name="Ikema Y."/>
            <person name="Okamoto S."/>
            <person name="Okitani R."/>
            <person name="Kawakami T."/>
            <person name="Noguchi S."/>
            <person name="Itoh T."/>
            <person name="Shigeta K."/>
            <person name="Senba T."/>
            <person name="Matsumura K."/>
            <person name="Nakajima Y."/>
            <person name="Mizuno T."/>
            <person name="Morinaga M."/>
            <person name="Sasaki M."/>
            <person name="Togashi T."/>
            <person name="Oyama M."/>
            <person name="Hata H."/>
            <person name="Watanabe M."/>
            <person name="Komatsu T."/>
            <person name="Mizushima-Sugano J."/>
            <person name="Satoh T."/>
            <person name="Shirai Y."/>
            <person name="Takahashi Y."/>
            <person name="Nakagawa K."/>
            <person name="Okumura K."/>
            <person name="Nagase T."/>
            <person name="Nomura N."/>
            <person name="Kikuchi H."/>
            <person name="Masuho Y."/>
            <person name="Yamashita R."/>
            <person name="Nakai K."/>
            <person name="Yada T."/>
            <person name="Nakamura Y."/>
            <person name="Ohara O."/>
            <person name="Isogai T."/>
            <person name="Sugano S."/>
        </authorList>
    </citation>
    <scope>NUCLEOTIDE SEQUENCE [LARGE SCALE MRNA]</scope>
    <source>
        <tissue>Brain</tissue>
    </source>
</reference>
<reference key="4">
    <citation type="submission" date="2005-03" db="EMBL/GenBank/DDBJ databases">
        <authorList>
            <person name="Totoki Y."/>
            <person name="Toyoda A."/>
            <person name="Takeda T."/>
            <person name="Sakaki Y."/>
            <person name="Tanaka A."/>
            <person name="Yokoyama S."/>
            <person name="Ohara O."/>
            <person name="Nagase T."/>
            <person name="Kikuno R.F."/>
        </authorList>
    </citation>
    <scope>NUCLEOTIDE SEQUENCE [LARGE SCALE MRNA]</scope>
    <scope>VARIANT ALA-351</scope>
    <source>
        <tissue>Aortic endothelium</tissue>
    </source>
</reference>
<reference key="5">
    <citation type="submission" date="2004-04" db="EMBL/GenBank/DDBJ databases">
        <authorList>
            <consortium name="NIEHS SNPs program"/>
        </authorList>
    </citation>
    <scope>NUCLEOTIDE SEQUENCE [GENOMIC DNA]</scope>
    <scope>VARIANT ALA-351</scope>
</reference>
<reference key="6">
    <citation type="submission" date="2005-09" db="EMBL/GenBank/DDBJ databases">
        <authorList>
            <person name="Mural R.J."/>
            <person name="Istrail S."/>
            <person name="Sutton G.G."/>
            <person name="Florea L."/>
            <person name="Halpern A.L."/>
            <person name="Mobarry C.M."/>
            <person name="Lippert R."/>
            <person name="Walenz B."/>
            <person name="Shatkay H."/>
            <person name="Dew I."/>
            <person name="Miller J.R."/>
            <person name="Flanigan M.J."/>
            <person name="Edwards N.J."/>
            <person name="Bolanos R."/>
            <person name="Fasulo D."/>
            <person name="Halldorsson B.V."/>
            <person name="Hannenhalli S."/>
            <person name="Turner R."/>
            <person name="Yooseph S."/>
            <person name="Lu F."/>
            <person name="Nusskern D.R."/>
            <person name="Shue B.C."/>
            <person name="Zheng X.H."/>
            <person name="Zhong F."/>
            <person name="Delcher A.L."/>
            <person name="Huson D.H."/>
            <person name="Kravitz S.A."/>
            <person name="Mouchard L."/>
            <person name="Reinert K."/>
            <person name="Remington K.A."/>
            <person name="Clark A.G."/>
            <person name="Waterman M.S."/>
            <person name="Eichler E.E."/>
            <person name="Adams M.D."/>
            <person name="Hunkapiller M.W."/>
            <person name="Myers E.W."/>
            <person name="Venter J.C."/>
        </authorList>
    </citation>
    <scope>NUCLEOTIDE SEQUENCE [LARGE SCALE GENOMIC DNA]</scope>
</reference>
<reference key="7">
    <citation type="journal article" date="2004" name="Genome Res.">
        <title>The status, quality, and expansion of the NIH full-length cDNA project: the Mammalian Gene Collection (MGC).</title>
        <authorList>
            <consortium name="The MGC Project Team"/>
        </authorList>
    </citation>
    <scope>NUCLEOTIDE SEQUENCE [LARGE SCALE MRNA]</scope>
    <source>
        <tissue>Uterus</tissue>
    </source>
</reference>
<reference key="8">
    <citation type="submission" date="2008-03" db="UniProtKB">
        <authorList>
            <person name="Bienvenut W.V."/>
            <person name="Vousden K.H."/>
            <person name="Lukashchuk N."/>
        </authorList>
    </citation>
    <scope>PROTEIN SEQUENCE OF 2-41; 82-88; 93-103; 168-196; 221-259; 314-324; 345-379; 390-410; 413-472; 490-499; 503-511; 552-568; 576-586 AND 589-600</scope>
    <scope>CLEAVAGE OF INITIATOR METHIONINE</scope>
    <scope>IDENTIFICATION BY MASS SPECTROMETRY</scope>
    <source>
        <tissue>Lung carcinoma</tissue>
    </source>
</reference>
<reference key="9">
    <citation type="journal article" date="1995" name="Cell">
        <title>Mammalian DNA nucleotide excision repair reconstituted with purified protein components.</title>
        <authorList>
            <person name="Aboussekhra A."/>
            <person name="Biggerstaff M."/>
            <person name="Shivji M.K."/>
            <person name="Vilpo J.A."/>
            <person name="Moncollin V."/>
            <person name="Podust V.N."/>
            <person name="Protic M."/>
            <person name="Huebscher U."/>
            <person name="Egly J.M."/>
            <person name="Wood R.D."/>
        </authorList>
    </citation>
    <scope>FUNCTION IN NUCLEOTIDE EXCISION REPAIR</scope>
</reference>
<reference key="10">
    <citation type="journal article" date="1995" name="Nature">
        <title>RPA involvement in the damage-recognition and incision steps of nucleotide excision repair.</title>
        <authorList>
            <person name="He Z."/>
            <person name="Henricksen L.A."/>
            <person name="Wold M.S."/>
            <person name="Ingles C.J."/>
        </authorList>
    </citation>
    <scope>FUNCTION IN NUCLEOTIDE EXCISION REPAIR</scope>
    <scope>INTERACTION WITH XPA</scope>
</reference>
<reference key="11">
    <citation type="journal article" date="1995" name="Mol. Cell. Biol.">
        <title>Rpa4, a homolog of the 34-kilodalton subunit of the replication protein A complex.</title>
        <authorList>
            <person name="Keshav K.F."/>
            <person name="Chen C."/>
            <person name="Dutta A."/>
        </authorList>
    </citation>
    <scope>INTERACTION WITH RPA4</scope>
</reference>
<reference key="12">
    <citation type="journal article" date="1997" name="Biochemistry">
        <title>Role of protein-protein interactions in the function of replication protein A (RPA): RPA modulates the activity of DNA polymerase alpha by multiple mechanisms.</title>
        <authorList>
            <person name="Braun K.A."/>
            <person name="Lao Y."/>
            <person name="He Z."/>
            <person name="Ingles C.J."/>
            <person name="Wold M.S."/>
        </authorList>
    </citation>
    <scope>INTERACTION WITH POLA1</scope>
</reference>
<reference key="13">
    <citation type="journal article" date="1998" name="J. Biol. Chem.">
        <title>The evolutionarily conserved zinc finger motif in the largest subunit of human replication protein A is required for DNA replication and mismatch repair but not for nucleotide excision repair.</title>
        <authorList>
            <person name="Lin Y.L."/>
            <person name="Shivji M.K."/>
            <person name="Chen C."/>
            <person name="Kolodner R."/>
            <person name="Wood R.D."/>
            <person name="Dutta A."/>
        </authorList>
    </citation>
    <scope>FUNCTION IN DNA REPLICATION</scope>
    <scope>FUNCTION IN DNA MISMATCH REPAIR</scope>
    <scope>FUNCTION IN NUCLEOTIDE EXCISION REPAIR</scope>
    <scope>MUTAGENESIS OF CYS-500 AND CYS-503</scope>
</reference>
<reference key="14">
    <citation type="journal article" date="1998" name="J. Biol. Chem.">
        <title>Replication protein A stimulates long patch DNA base excision repair.</title>
        <authorList>
            <person name="DeMott M.S."/>
            <person name="Zigman S."/>
            <person name="Bambara R.A."/>
        </authorList>
    </citation>
    <scope>FUNCTION IN BASE EXCISION REPAIR</scope>
</reference>
<reference key="15">
    <citation type="journal article" date="1998" name="Nat. Struct. Biol.">
        <title>Solution structure of the DNA- and RPA-binding domain of the human repair factor XPA.</title>
        <authorList>
            <person name="Ikegami T."/>
            <person name="Kuraoka I."/>
            <person name="Saijo M."/>
            <person name="Kodo N."/>
            <person name="Kyogoku Y."/>
            <person name="Morikawa K."/>
            <person name="Tanaka K."/>
            <person name="Shirakawa M."/>
        </authorList>
    </citation>
    <scope>INTERACTION WITH XPA</scope>
</reference>
<reference key="16">
    <citation type="journal article" date="1999" name="Biochemistry">
        <title>Interactions of human nucleotide excision repair protein XPA with DNA and RPA70 Delta C327: chemical shift mapping and 15N NMR relaxation studies.</title>
        <authorList>
            <person name="Buchko G.W."/>
            <person name="Daughdrill G.W."/>
            <person name="de Lorimier R."/>
            <person name="Sudha Rao B.K."/>
            <person name="Isern N.G."/>
            <person name="Lingbeck J.M."/>
            <person name="Taylor J.-S."/>
            <person name="Wold M.S."/>
            <person name="Gochin M."/>
            <person name="Spicer L.D."/>
            <person name="Lowry D.F."/>
            <person name="Kennedy M.A."/>
        </authorList>
    </citation>
    <scope>INTERACTION WITH XPA</scope>
</reference>
<reference key="17">
    <citation type="journal article" date="2003" name="Nature">
        <title>Proteomic characterization of the human centrosome by protein correlation profiling.</title>
        <authorList>
            <person name="Andersen J.S."/>
            <person name="Wilkinson C.J."/>
            <person name="Mayor T."/>
            <person name="Mortensen P."/>
            <person name="Nigg E.A."/>
            <person name="Mann M."/>
        </authorList>
    </citation>
    <scope>IDENTIFICATION BY MASS SPECTROMETRY</scope>
    <source>
        <tissue>Lymphoblast</tissue>
    </source>
</reference>
<reference key="18">
    <citation type="journal article" date="2003" name="Science">
        <title>Sensing DNA damage through ATRIP recognition of RPA-ssDNA complexes.</title>
        <authorList>
            <person name="Zou L."/>
            <person name="Elledge S.J."/>
        </authorList>
    </citation>
    <scope>FUNCTION IN CHEK1 SIGNALING</scope>
</reference>
<reference key="19">
    <citation type="journal article" date="2005" name="Mol. Cell. Biol.">
        <title>Sumoylation of the novel protein hRIPbeta is involved in replication protein A deposition in PML nuclear bodies.</title>
        <authorList>
            <person name="Park J."/>
            <person name="Seo T."/>
            <person name="Kim H."/>
            <person name="Choe J."/>
        </authorList>
    </citation>
    <scope>INTERACTION WITH RIPK1</scope>
</reference>
<reference key="20">
    <citation type="journal article" date="2007" name="Blood">
        <title>FANCJ (BACH1) helicase forms DNA damage inducible foci with replication protein A and interacts physically and functionally with the single-stranded DNA-binding protein.</title>
        <authorList>
            <person name="Gupta R."/>
            <person name="Sharma S."/>
            <person name="Sommers J.A."/>
            <person name="Kenny M.K."/>
            <person name="Cantor S.B."/>
            <person name="Brosh R.M. Jr."/>
        </authorList>
    </citation>
    <scope>FUNCTION</scope>
    <scope>INTERACTION WITH BRIP1</scope>
    <scope>SUBCELLULAR LOCATION</scope>
</reference>
<reference key="21">
    <citation type="journal article" date="2007" name="J. Mol. Biol.">
        <title>RPA mediates recombination repair during replication stress and is displaced from DNA by checkpoint signalling in human cells.</title>
        <authorList>
            <person name="Sleeth K.M."/>
            <person name="Sorensen C.S."/>
            <person name="Issaeva N."/>
            <person name="Dziegielewski J."/>
            <person name="Bartek J."/>
            <person name="Helleday T."/>
        </authorList>
    </citation>
    <scope>FUNCTION IN HOMOLOGOUS RECOMBINATION REPAIR</scope>
</reference>
<reference key="22">
    <citation type="journal article" date="2007" name="Nucleic Acids Res.">
        <title>Replication protein A prevents accumulation of single-stranded telomeric DNA in cells that use alternative lengthening of telomeres.</title>
        <authorList>
            <person name="Grudic A."/>
            <person name="Jul-Larsen A."/>
            <person name="Haring S.J."/>
            <person name="Wold M.S."/>
            <person name="Loenning P.E."/>
            <person name="Bjerkvig R."/>
            <person name="Boee S.O."/>
        </authorList>
    </citation>
    <scope>FUNCTION IN TELOMERE MAINTENANCE</scope>
    <scope>SUBCELLULAR LOCATION</scope>
</reference>
<reference key="23">
    <citation type="journal article" date="2007" name="Science">
        <title>ATM and ATR substrate analysis reveals extensive protein networks responsive to DNA damage.</title>
        <authorList>
            <person name="Matsuoka S."/>
            <person name="Ballif B.A."/>
            <person name="Smogorzewska A."/>
            <person name="McDonald E.R. III"/>
            <person name="Hurov K.E."/>
            <person name="Luo J."/>
            <person name="Bakalarski C.E."/>
            <person name="Zhao Z."/>
            <person name="Solimini N."/>
            <person name="Lerenthal Y."/>
            <person name="Shiloh Y."/>
            <person name="Gygi S.P."/>
            <person name="Elledge S.J."/>
        </authorList>
    </citation>
    <scope>PHOSPHORYLATION [LARGE SCALE ANALYSIS] AT THR-180</scope>
    <scope>IDENTIFICATION BY MASS SPECTROMETRY [LARGE SCALE ANALYSIS]</scope>
    <source>
        <tissue>Embryonic kidney</tissue>
    </source>
</reference>
<reference key="24">
    <citation type="journal article" date="2008" name="Proc. Natl. Acad. Sci. U.S.A.">
        <title>A quantitative atlas of mitotic phosphorylation.</title>
        <authorList>
            <person name="Dephoure N."/>
            <person name="Zhou C."/>
            <person name="Villen J."/>
            <person name="Beausoleil S.A."/>
            <person name="Bakalarski C.E."/>
            <person name="Elledge S.J."/>
            <person name="Gygi S.P."/>
        </authorList>
    </citation>
    <scope>IDENTIFICATION BY MASS SPECTROMETRY [LARGE SCALE ANALYSIS]</scope>
    <source>
        <tissue>Cervix carcinoma</tissue>
    </source>
</reference>
<reference key="25">
    <citation type="journal article" date="2009" name="Anal. Chem.">
        <title>Lys-N and trypsin cover complementary parts of the phosphoproteome in a refined SCX-based approach.</title>
        <authorList>
            <person name="Gauci S."/>
            <person name="Helbig A.O."/>
            <person name="Slijper M."/>
            <person name="Krijgsveld J."/>
            <person name="Heck A.J."/>
            <person name="Mohammed S."/>
        </authorList>
    </citation>
    <scope>ACETYLATION [LARGE SCALE ANALYSIS] AT MET-1</scope>
    <scope>IDENTIFICATION BY MASS SPECTROMETRY [LARGE SCALE ANALYSIS]</scope>
</reference>
<reference key="26">
    <citation type="journal article" date="2009" name="J. Biol. Chem.">
        <title>An alternative form of replication protein a prevents viral replication in vitro.</title>
        <authorList>
            <person name="Mason A.C."/>
            <person name="Haring S.J."/>
            <person name="Pryor J.M."/>
            <person name="Staloch C.A."/>
            <person name="Gan T.F."/>
            <person name="Wold M.S."/>
        </authorList>
    </citation>
    <scope>IDENTIFICATION IN THE ARPA COMPLEX</scope>
    <scope>FUNCTION OF THE ARPA COMPLEX</scope>
</reference>
<reference key="27">
    <citation type="journal article" date="2009" name="Nucleic Acids Res.">
        <title>Evidence for direct contact between the RPA3 subunit of the human replication protein A and single-stranded DNA.</title>
        <authorList>
            <person name="Salas T.R."/>
            <person name="Petruseva I."/>
            <person name="Lavrik O."/>
            <person name="Saintome C."/>
        </authorList>
    </citation>
    <scope>SINGLE-STRANDED DNA-BINDING</scope>
</reference>
<reference key="28">
    <citation type="journal article" date="2009" name="Science">
        <title>Lysine acetylation targets protein complexes and co-regulates major cellular functions.</title>
        <authorList>
            <person name="Choudhary C."/>
            <person name="Kumar C."/>
            <person name="Gnad F."/>
            <person name="Nielsen M.L."/>
            <person name="Rehman M."/>
            <person name="Walther T.C."/>
            <person name="Olsen J.V."/>
            <person name="Mann M."/>
        </authorList>
    </citation>
    <scope>ACETYLATION [LARGE SCALE ANALYSIS] AT LYS-163; LYS-167 AND LYS-259</scope>
    <scope>IDENTIFICATION BY MASS SPECTROMETRY [LARGE SCALE ANALYSIS]</scope>
</reference>
<reference key="29">
    <citation type="journal article" date="2010" name="J. Biol. Chem.">
        <title>An alternative form of replication protein a expressed in normal human tissues supports DNA repair.</title>
        <authorList>
            <person name="Kemp M.G."/>
            <person name="Mason A.C."/>
            <person name="Carreira A."/>
            <person name="Reardon J.T."/>
            <person name="Haring S.J."/>
            <person name="Borgstahl G.E."/>
            <person name="Kowalczykowski S.C."/>
            <person name="Sancar A."/>
            <person name="Wold M.S."/>
        </authorList>
    </citation>
    <scope>FUNCTION OF THE ARPA COMPLEX</scope>
</reference>
<reference key="30">
    <citation type="journal article" date="2010" name="Mol. Cell">
        <title>Regulation of DNA repair through desumoylation and sumoylation of replication protein A complex.</title>
        <authorList>
            <person name="Dou H."/>
            <person name="Huang C."/>
            <person name="Singh M."/>
            <person name="Carpenter P.B."/>
            <person name="Yeh E.T."/>
        </authorList>
    </citation>
    <scope>SUMOYLATION AT LYS-449 AND LYS-577</scope>
    <scope>DESUMOYLATION BY SENP6</scope>
    <scope>MUTAGENESIS OF LYS-449 AND LYS-577</scope>
    <scope>INTERACTION WITH SENP6 AND RAD51</scope>
</reference>
<reference key="31">
    <citation type="journal article" date="2010" name="Sci. Signal.">
        <title>Quantitative phosphoproteomics reveals widespread full phosphorylation site occupancy during mitosis.</title>
        <authorList>
            <person name="Olsen J.V."/>
            <person name="Vermeulen M."/>
            <person name="Santamaria A."/>
            <person name="Kumar C."/>
            <person name="Miller M.L."/>
            <person name="Jensen L.J."/>
            <person name="Gnad F."/>
            <person name="Cox J."/>
            <person name="Jensen T.S."/>
            <person name="Nigg E.A."/>
            <person name="Brunak S."/>
            <person name="Mann M."/>
        </authorList>
    </citation>
    <scope>PHOSPHORYLATION [LARGE SCALE ANALYSIS] AT THR-180; THR-191 AND SER-384</scope>
    <scope>IDENTIFICATION BY MASS SPECTROMETRY [LARGE SCALE ANALYSIS]</scope>
    <source>
        <tissue>Cervix carcinoma</tissue>
    </source>
</reference>
<reference key="32">
    <citation type="journal article" date="2011" name="BMC Syst. Biol.">
        <title>Initial characterization of the human central proteome.</title>
        <authorList>
            <person name="Burkard T.R."/>
            <person name="Planyavsky M."/>
            <person name="Kaupe I."/>
            <person name="Breitwieser F.P."/>
            <person name="Buerckstuemmer T."/>
            <person name="Bennett K.L."/>
            <person name="Superti-Furga G."/>
            <person name="Colinge J."/>
        </authorList>
    </citation>
    <scope>IDENTIFICATION BY MASS SPECTROMETRY [LARGE SCALE ANALYSIS]</scope>
</reference>
<reference key="33">
    <citation type="journal article" date="2012" name="J. Biol. Chem.">
        <title>Human DNA helicase B (HDHB) binds to replication protein A and facilitates cellular recovery from replication stress.</title>
        <authorList>
            <person name="Guler G.D."/>
            <person name="Liu H."/>
            <person name="Vaithiyalingam S."/>
            <person name="Arnett D.R."/>
            <person name="Kremmer E."/>
            <person name="Chazin W.J."/>
            <person name="Fanning E."/>
        </authorList>
    </citation>
    <scope>INTERACTION WITH HELB</scope>
    <scope>MUTAGENESIS OF ARG-41 AND ARG-43</scope>
</reference>
<reference key="34">
    <citation type="journal article" date="2012" name="Mol. Cell. Proteomics">
        <title>Comparative large-scale characterisation of plant vs. mammal proteins reveals similar and idiosyncratic N-alpha acetylation features.</title>
        <authorList>
            <person name="Bienvenut W.V."/>
            <person name="Sumpton D."/>
            <person name="Martinez A."/>
            <person name="Lilla S."/>
            <person name="Espagne C."/>
            <person name="Meinnel T."/>
            <person name="Giglione C."/>
        </authorList>
    </citation>
    <scope>ACETYLATION [LARGE SCALE ANALYSIS] AT MET-1</scope>
    <scope>IDENTIFICATION BY MASS SPECTROMETRY [LARGE SCALE ANALYSIS]</scope>
</reference>
<reference key="35">
    <citation type="journal article" date="2013" name="EMBO Rep.">
        <title>hPrimpol1/CCDC111 is a human DNA primase-polymerase required for the maintenance of genome integrity.</title>
        <authorList>
            <person name="Wan L."/>
            <person name="Lou J."/>
            <person name="Xia Y."/>
            <person name="Su B."/>
            <person name="Liu T."/>
            <person name="Cui J."/>
            <person name="Sun Y."/>
            <person name="Lou H."/>
            <person name="Huang J."/>
        </authorList>
    </citation>
    <scope>INTERACTION WITH PRIMPOL</scope>
</reference>
<reference key="36">
    <citation type="journal article" date="2013" name="J. Proteome Res.">
        <title>Toward a comprehensive characterization of a human cancer cell phosphoproteome.</title>
        <authorList>
            <person name="Zhou H."/>
            <person name="Di Palma S."/>
            <person name="Preisinger C."/>
            <person name="Peng M."/>
            <person name="Polat A.N."/>
            <person name="Heck A.J."/>
            <person name="Mohammed S."/>
        </authorList>
    </citation>
    <scope>PHOSPHORYLATION [LARGE SCALE ANALYSIS] AT THR-191 AND SER-384</scope>
    <scope>IDENTIFICATION BY MASS SPECTROMETRY [LARGE SCALE ANALYSIS]</scope>
    <source>
        <tissue>Cervix carcinoma</tissue>
        <tissue>Erythroleukemia</tissue>
    </source>
</reference>
<reference key="37">
    <citation type="journal article" date="2014" name="J. Proteomics">
        <title>An enzyme assisted RP-RPLC approach for in-depth analysis of human liver phosphoproteome.</title>
        <authorList>
            <person name="Bian Y."/>
            <person name="Song C."/>
            <person name="Cheng K."/>
            <person name="Dong M."/>
            <person name="Wang F."/>
            <person name="Huang J."/>
            <person name="Sun D."/>
            <person name="Wang L."/>
            <person name="Ye M."/>
            <person name="Zou H."/>
        </authorList>
    </citation>
    <scope>IDENTIFICATION BY MASS SPECTROMETRY [LARGE SCALE ANALYSIS]</scope>
    <source>
        <tissue>Liver</tissue>
    </source>
</reference>
<reference key="38">
    <citation type="journal article" date="2014" name="Mol. Cell">
        <title>PRP19 transforms into a sensor of RPA-ssDNA after DNA damage and drives ATR activation via a ubiquitin-mediated circuitry.</title>
        <authorList>
            <person name="Marechal A."/>
            <person name="Li J.M."/>
            <person name="Ji X.Y."/>
            <person name="Wu C.S."/>
            <person name="Yazinski S.A."/>
            <person name="Nguyen H.D."/>
            <person name="Liu S."/>
            <person name="Jimenez A.E."/>
            <person name="Jin J."/>
            <person name="Zou L."/>
        </authorList>
    </citation>
    <scope>FUNCTION</scope>
    <scope>INTERACTION WITH PRPF19</scope>
    <scope>UBIQUITINATION BY PRPF19</scope>
</reference>
<reference key="39">
    <citation type="journal article" date="2014" name="Nucleic Acids Res.">
        <title>PARG is dispensable for recovery from transient replicative stress but required to prevent detrimental accumulation of poly(ADP-ribose) upon prolonged replicative stress.</title>
        <authorList>
            <person name="Illuzzi G."/>
            <person name="Fouquerel E."/>
            <person name="Ame J.C."/>
            <person name="Noll A."/>
            <person name="Rehmet K."/>
            <person name="Nasheuer H.P."/>
            <person name="Dantzer F."/>
            <person name="Schreiber V."/>
        </authorList>
    </citation>
    <scope>ADP-RIBOSYLATION</scope>
</reference>
<reference key="40">
    <citation type="journal article" date="2015" name="Nucleic Acids Res.">
        <title>Human PrimPol is a highly error-prone polymerase regulated by single-stranded DNA binding proteins.</title>
        <authorList>
            <person name="Guilliam T.A."/>
            <person name="Jozwiakowski S.K."/>
            <person name="Ehlinger A."/>
            <person name="Barnes R.P."/>
            <person name="Rudd S.G."/>
            <person name="Bailey L.J."/>
            <person name="Skehel J.M."/>
            <person name="Eckert K.A."/>
            <person name="Chazin W.J."/>
            <person name="Doherty A.J."/>
        </authorList>
    </citation>
    <scope>INTERACTION WITH PRIMPOL</scope>
</reference>
<reference key="41">
    <citation type="journal article" date="2016" name="Mol. Cell">
        <title>HELB is a feedback inhibitor of DNA end resection.</title>
        <authorList>
            <person name="Tkac J."/>
            <person name="Xu G."/>
            <person name="Adhikary H."/>
            <person name="Young J.T."/>
            <person name="Gallo D."/>
            <person name="Escribano-Diaz C."/>
            <person name="Krietsch J."/>
            <person name="Orthwein A."/>
            <person name="Munro M."/>
            <person name="Sol W."/>
            <person name="Al-Hakim A."/>
            <person name="Lin Z.Y."/>
            <person name="Jonkers J."/>
            <person name="Borst P."/>
            <person name="Brown G.W."/>
            <person name="Gingras A.C."/>
            <person name="Rottenberg S."/>
            <person name="Masson J.Y."/>
            <person name="Durocher D."/>
        </authorList>
    </citation>
    <scope>INTERACTION WITH HELB</scope>
</reference>
<reference key="42">
    <citation type="journal article" date="2016" name="J. Biol. Chem.">
        <title>Ewing Tumor-associated Antigen 1 interacts with replication protein A to promote restart of stalled replication forks.</title>
        <authorList>
            <person name="Feng S."/>
            <person name="Zhao Y."/>
            <person name="Xu Y."/>
            <person name="Ning S."/>
            <person name="Huo W."/>
            <person name="Hou M."/>
            <person name="Gao G."/>
            <person name="Ji J."/>
            <person name="Guo R."/>
            <person name="Xu D."/>
        </authorList>
    </citation>
    <scope>INTERACTION WITH ETAA1</scope>
</reference>
<reference key="43">
    <citation type="journal article" date="2016" name="Nat. Cell Biol.">
        <title>ETAA1 acts at stalled replication forks to maintain genome integrity.</title>
        <authorList>
            <person name="Bass T.E."/>
            <person name="Luzwick J.W."/>
            <person name="Kavanaugh G."/>
            <person name="Carroll C."/>
            <person name="Dungrawala H."/>
            <person name="Glick G.G."/>
            <person name="Feldkamp M.D."/>
            <person name="Putney R."/>
            <person name="Chazin W.J."/>
            <person name="Cortez D."/>
        </authorList>
    </citation>
    <scope>FUNCTION</scope>
    <scope>INTERACTION WITH ETAA1</scope>
</reference>
<reference key="44">
    <citation type="journal article" date="2016" name="Nat. Cell Biol.">
        <title>Activation of the ATR kinase by the RPA-binding protein ETAA1.</title>
        <authorList>
            <person name="Haahr P."/>
            <person name="Hoffmann S."/>
            <person name="Tollenaere M.A."/>
            <person name="Ho T."/>
            <person name="Toledo L.I."/>
            <person name="Mann M."/>
            <person name="Bekker-Jensen S."/>
            <person name="Raeschle M."/>
            <person name="Mailand N."/>
        </authorList>
    </citation>
    <scope>FUNCTION</scope>
    <scope>INTERACTION WITH ETAA1</scope>
</reference>
<reference key="45">
    <citation type="journal article" date="2015" name="Mol. Cell">
        <title>RFWD3-dependent ubiquitination of RPA regulates repair at stalled replication forks.</title>
        <authorList>
            <person name="Elia A.E."/>
            <person name="Wang D.C."/>
            <person name="Willis N.A."/>
            <person name="Boardman A.P."/>
            <person name="Hajdu I."/>
            <person name="Adeyemi R.O."/>
            <person name="Lowry E."/>
            <person name="Gygi S.P."/>
            <person name="Scully R."/>
            <person name="Elledge S.J."/>
        </authorList>
    </citation>
    <scope>UBIQUITINATION AT LYS-22; LYS-88; LYS-163; LYS-167; LYS-183; LYS-220; LYS-244; LYS-259; LYS-267; LYS-331; LYS-410; LYS-431; LYS-458 AND LYS-553</scope>
</reference>
<reference key="46">
    <citation type="journal article" date="2022" name="Mol. Cell">
        <title>A PARylation-phosphorylation cascade promotes TOPBP1 loading and RPA-RAD51 exchange in homologous recombination.</title>
        <authorList>
            <person name="Zhao J."/>
            <person name="Tian S."/>
            <person name="Guo Q."/>
            <person name="Bao K."/>
            <person name="Yu G."/>
            <person name="Wang X."/>
            <person name="Shen X."/>
            <person name="Zhang J."/>
            <person name="Chen J."/>
            <person name="Yang Y."/>
            <person name="Liu L."/>
            <person name="Li X."/>
            <person name="Hao J."/>
            <person name="Yang N."/>
            <person name="Liu Z."/>
            <person name="Ai D."/>
            <person name="Yang J."/>
            <person name="Zhu Y."/>
            <person name="Yao Z."/>
            <person name="Ma S."/>
            <person name="Zhang K."/>
            <person name="Shi L."/>
        </authorList>
    </citation>
    <scope>ADP-RIBOSYLATION</scope>
    <scope>INTERACTION WITH HTATSF1</scope>
</reference>
<reference key="47">
    <citation type="journal article" date="1997" name="Nature">
        <title>Structure of the single-stranded-DNA-binding domain of replication protein A bound to DNA.</title>
        <authorList>
            <person name="Bochkarev A."/>
            <person name="Pfuetzner R.A."/>
            <person name="Edwards A.M."/>
            <person name="Frappier L."/>
        </authorList>
    </citation>
    <scope>X-RAY CRYSTALLOGRAPHY (2.4 ANGSTROMS) OF 183-420</scope>
</reference>
<reference evidence="37 38" key="48">
    <citation type="journal article" date="2017" name="Nat. Commun.">
        <title>Molecular basis for PrimPol recruitment to replication forks by RPA.</title>
        <authorList>
            <person name="Guilliam T.A."/>
            <person name="Brissett N.C."/>
            <person name="Ehlinger A."/>
            <person name="Keen B.A."/>
            <person name="Kolesar P."/>
            <person name="Taylor E.M."/>
            <person name="Bailey L.J."/>
            <person name="Lindsay H.D."/>
            <person name="Chazin W.J."/>
            <person name="Doherty A.J."/>
        </authorList>
    </citation>
    <scope>X-RAY CRYSTALLOGRAPHY (1.28 ANGSTROMS) OF 1-120 IN COMPLEX WITH PRIMPOL</scope>
    <scope>INTERACTION WITH PRIMPOL</scope>
</reference>
<reference key="49">
    <citation type="journal article" date="2022" name="Blood">
        <title>Gain-of-function mutations in RPA1 cause a syndrome with short telomeres and somatic genetic rescue.</title>
        <authorList>
            <person name="Sharma R."/>
            <person name="Sahoo S.S."/>
            <person name="Honda M."/>
            <person name="Granger S.L."/>
            <person name="Goodings C."/>
            <person name="Sanchez L."/>
            <person name="Kuenstner A."/>
            <person name="Busch H."/>
            <person name="Beier F."/>
            <person name="Pruett-Miller S.M."/>
            <person name="Valentine M.B."/>
            <person name="Fernandez A.G."/>
            <person name="Chang T.C."/>
            <person name="Geli V."/>
            <person name="Churikov D."/>
            <person name="Hirschi S."/>
            <person name="Pastor V.B."/>
            <person name="Boerries M."/>
            <person name="Lauten M."/>
            <person name="Kelaidi C."/>
            <person name="Cooper M.A."/>
            <person name="Nicholas S."/>
            <person name="Rosenfeld J.A."/>
            <person name="Polychronopoulou S."/>
            <person name="Kannengiesser C."/>
            <person name="Saintome C."/>
            <person name="Niemeyer C.M."/>
            <person name="Revy P."/>
            <person name="Wold M.S."/>
            <person name="Spies M."/>
            <person name="Erlacher M."/>
            <person name="Coulon S."/>
            <person name="Wlodarski M.W."/>
        </authorList>
    </citation>
    <scope>VARIANTS PFBMFT6 ALA-227; LYS-240 AND ALA-270</scope>
    <scope>CHARACTERIZATION OF VARIANTS PFBMFT6 ALA-227; LYS-240 AND ALA-270</scope>
    <scope>INVOLVEMENT IN PFBMFT6</scope>
    <scope>FUNCTION</scope>
    <scope>SUBUNIT</scope>
</reference>
<keyword id="KW-0002">3D-structure</keyword>
<keyword id="KW-0007">Acetylation</keyword>
<keyword id="KW-0013">ADP-ribosylation</keyword>
<keyword id="KW-0903">Direct protein sequencing</keyword>
<keyword id="KW-0225">Disease variant</keyword>
<keyword id="KW-0227">DNA damage</keyword>
<keyword id="KW-0233">DNA recombination</keyword>
<keyword id="KW-0234">DNA repair</keyword>
<keyword id="KW-0235">DNA replication</keyword>
<keyword id="KW-0238">DNA-binding</keyword>
<keyword id="KW-1017">Isopeptide bond</keyword>
<keyword id="KW-0479">Metal-binding</keyword>
<keyword id="KW-0539">Nucleus</keyword>
<keyword id="KW-0597">Phosphoprotein</keyword>
<keyword id="KW-1267">Proteomics identification</keyword>
<keyword id="KW-1185">Reference proteome</keyword>
<keyword id="KW-0832">Ubl conjugation</keyword>
<keyword id="KW-0862">Zinc</keyword>
<keyword id="KW-0863">Zinc-finger</keyword>
<evidence type="ECO:0000250" key="1">
    <source>
        <dbReference type="UniProtKB" id="Q8VEE4"/>
    </source>
</evidence>
<evidence type="ECO:0000255" key="2"/>
<evidence type="ECO:0000256" key="3">
    <source>
        <dbReference type="SAM" id="MobiDB-lite"/>
    </source>
</evidence>
<evidence type="ECO:0000269" key="4">
    <source>
    </source>
</evidence>
<evidence type="ECO:0000269" key="5">
    <source>
    </source>
</evidence>
<evidence type="ECO:0000269" key="6">
    <source>
    </source>
</evidence>
<evidence type="ECO:0000269" key="7">
    <source>
    </source>
</evidence>
<evidence type="ECO:0000269" key="8">
    <source>
    </source>
</evidence>
<evidence type="ECO:0000269" key="9">
    <source>
    </source>
</evidence>
<evidence type="ECO:0000269" key="10">
    <source>
    </source>
</evidence>
<evidence type="ECO:0000269" key="11">
    <source>
    </source>
</evidence>
<evidence type="ECO:0000269" key="12">
    <source>
    </source>
</evidence>
<evidence type="ECO:0000269" key="13">
    <source>
    </source>
</evidence>
<evidence type="ECO:0000269" key="14">
    <source>
    </source>
</evidence>
<evidence type="ECO:0000269" key="15">
    <source>
    </source>
</evidence>
<evidence type="ECO:0000269" key="16">
    <source>
    </source>
</evidence>
<evidence type="ECO:0000269" key="17">
    <source>
    </source>
</evidence>
<evidence type="ECO:0000269" key="18">
    <source>
    </source>
</evidence>
<evidence type="ECO:0000269" key="19">
    <source>
    </source>
</evidence>
<evidence type="ECO:0000269" key="20">
    <source>
    </source>
</evidence>
<evidence type="ECO:0000269" key="21">
    <source>
    </source>
</evidence>
<evidence type="ECO:0000269" key="22">
    <source>
    </source>
</evidence>
<evidence type="ECO:0000269" key="23">
    <source>
    </source>
</evidence>
<evidence type="ECO:0000269" key="24">
    <source>
    </source>
</evidence>
<evidence type="ECO:0000269" key="25">
    <source>
    </source>
</evidence>
<evidence type="ECO:0000269" key="26">
    <source>
    </source>
</evidence>
<evidence type="ECO:0000269" key="27">
    <source>
    </source>
</evidence>
<evidence type="ECO:0000269" key="28">
    <source>
    </source>
</evidence>
<evidence type="ECO:0000269" key="29">
    <source>
    </source>
</evidence>
<evidence type="ECO:0000269" key="30">
    <source>
    </source>
</evidence>
<evidence type="ECO:0000269" key="31">
    <source>
    </source>
</evidence>
<evidence type="ECO:0000269" key="32">
    <source>
    </source>
</evidence>
<evidence type="ECO:0000269" key="33">
    <source ref="4"/>
</evidence>
<evidence type="ECO:0000269" key="34">
    <source ref="5"/>
</evidence>
<evidence type="ECO:0000269" key="35">
    <source ref="8"/>
</evidence>
<evidence type="ECO:0000305" key="36"/>
<evidence type="ECO:0007744" key="37">
    <source>
        <dbReference type="PDB" id="5N85"/>
    </source>
</evidence>
<evidence type="ECO:0007744" key="38">
    <source>
        <dbReference type="PDB" id="5N8A"/>
    </source>
</evidence>
<evidence type="ECO:0007744" key="39">
    <source>
    </source>
</evidence>
<evidence type="ECO:0007744" key="40">
    <source>
    </source>
</evidence>
<evidence type="ECO:0007744" key="41">
    <source>
    </source>
</evidence>
<evidence type="ECO:0007744" key="42">
    <source>
    </source>
</evidence>
<evidence type="ECO:0007744" key="43">
    <source>
    </source>
</evidence>
<evidence type="ECO:0007744" key="44">
    <source>
    </source>
</evidence>
<evidence type="ECO:0007829" key="45">
    <source>
        <dbReference type="PDB" id="1EWI"/>
    </source>
</evidence>
<evidence type="ECO:0007829" key="46">
    <source>
        <dbReference type="PDB" id="1JMC"/>
    </source>
</evidence>
<evidence type="ECO:0007829" key="47">
    <source>
        <dbReference type="PDB" id="1L1O"/>
    </source>
</evidence>
<evidence type="ECO:0007829" key="48">
    <source>
        <dbReference type="PDB" id="2B29"/>
    </source>
</evidence>
<evidence type="ECO:0007829" key="49">
    <source>
        <dbReference type="PDB" id="4O0A"/>
    </source>
</evidence>
<evidence type="ECO:0007829" key="50">
    <source>
        <dbReference type="PDB" id="7XUT"/>
    </source>
</evidence>
<evidence type="ECO:0007829" key="51">
    <source>
        <dbReference type="PDB" id="8RK2"/>
    </source>
</evidence>
<comment type="function">
    <text evidence="5 7 8 9 10 11 15 21 22 24 26 27 30 32">As part of the heterotrimeric replication protein A complex (RPA/RP-A), binds and stabilizes single-stranded DNA intermediates that form during DNA replication or upon DNA stress. It prevents their reannealing and in parallel, recruits and activates different proteins and complexes involved in DNA metabolism (PubMed:17596542, PubMed:27723717, PubMed:27723720). Thereby, it plays an essential role both in DNA replication and the cellular response to DNA damage (PubMed:9430682). In the cellular response to DNA damage, the RPA complex controls DNA repair and DNA damage checkpoint activation. Through recruitment of ATRIP activates the ATR kinase a master regulator of the DNA damage response (PubMed:24332808). It is required for the recruitment of the DNA double-strand break repair factors RAD51 and RAD52 to chromatin in response to DNA damage (PubMed:17765923). Also recruits to sites of DNA damage proteins like XPA and XPG that are involved in nucleotide excision repair and is required for this mechanism of DNA repair (PubMed:7697716). Also plays a role in base excision repair (BER) probably through interaction with UNG (PubMed:9765279). Also recruits SMARCAL1/HARP, which is involved in replication fork restart, to sites of DNA damage. Plays a role in telomere maintenance (PubMed:17959650, PubMed:34767620). As part of the alternative replication protein A complex, aRPA, binds single-stranded DNA and probably plays a role in DNA repair. Compared to the RPA2-containing, canonical RPA complex, may not support chromosomal DNA replication and cell cycle progression through S-phase. The aRPA may not promote efficient priming by DNA polymerase alpha but could support DNA synthesis by polymerase delta in presence of PCNA and replication factor C (RFC), the dual incision/excision reaction of nucleotide excision repair and RAD51-dependent strand exchange (PubMed:19996105). RPA stimulates 5'-3' helicase activity of the BRIP1/FANCJ (PubMed:17596542).</text>
</comment>
<comment type="subunit">
    <text evidence="1 4 6 7 10 12 13 14 15 17 19 20 21 22 23 24 25 27 28 29 31">Component of the canonical replication protein A complex (RPA), a heterotrimer composed of RPA1, RPA2 and RPA3 (PubMed:27723717, PubMed:27723720, PubMed:34767620). Also a component of the aRPA, the alternative replication protein A complex, a trimeric complex similar to the replication protein A complex/RPA but where RPA1 and RPA3 are associated with RPA4 instead of RPA2 (PubMed:19116208, PubMed:7760808). The DNA-binding activity may reside exclusively on the RPA1 subunit. Interacts with PRPF19; the PRP19-CDC5L complex is recruited to the sites of DNA repair where it ubiquitinates the replication protein A complex (RPA) (PubMed:24332808). Interacts with RIPK1 (PubMed:16135809). Interacts with the polymerase alpha subunit POLA1/p180; this interaction stabilizes the replicative complex and reduces the misincorporation rate of DNA polymerase alpha by acting as a fidelity clamp (PubMed:9214288). Interacts with RAD51 and SENP6 to regulate DNA repair (PubMed:20705237). Interacts with HELB; this interaction promotes HELB recruitment to chromatin following DNA damage (PubMed:22194613, PubMed:26774285). Interacts with PRIMPOL; leading to recruit PRIMPOL on chromatin and stimulate its DNA primase activity (PubMed:24126761, PubMed:25550423, PubMed:28534480). Interacts with XPA; the interaction is direct and associates XPA with the RPA complex (PubMed:10563794, PubMed:7700386, PubMed:9699634). Interacts with ETAA1; the interaction is direct and promotes ETAA1 recruitment at stalled replication forks (PubMed:27601467, PubMed:27723717, PubMed:27723720). Interacts with RPA1; this interaction associates HROB with the RPA complex (By similarity). Interacts (when poly-ADP-ribosylated) with HTATSF1 (PubMed:35597237). Interacts with BRIP1/FANCJ via this RPA1 subunit; following DNA damage they colocalize in foci in the nucleus (PubMed:17596542).</text>
</comment>
<comment type="interaction">
    <interactant intactId="EBI-621389">
        <id>P27694</id>
    </interactant>
    <interactant intactId="EBI-621372">
        <id>P54132</id>
        <label>BLM</label>
    </interactant>
    <organismsDiffer>false</organismsDiffer>
    <experiments>4</experiments>
</comment>
<comment type="interaction">
    <interactant intactId="EBI-621389">
        <id>P27694</id>
    </interactant>
    <interactant intactId="EBI-355106">
        <id>P17066</id>
        <label>HSPA6</label>
    </interactant>
    <organismsDiffer>false</organismsDiffer>
    <experiments>3</experiments>
</comment>
<comment type="interaction">
    <interactant intactId="EBI-621389">
        <id>P27694</id>
    </interactant>
    <interactant intactId="EBI-742948">
        <id>Q5JR59</id>
        <label>MTUS2</label>
    </interactant>
    <organismsDiffer>false</organismsDiffer>
    <experiments>3</experiments>
</comment>
<comment type="interaction">
    <interactant intactId="EBI-621389">
        <id>P27694</id>
    </interactant>
    <interactant intactId="EBI-11522433">
        <id>Q5JR59-3</id>
        <label>MTUS2</label>
    </interactant>
    <organismsDiffer>false</organismsDiffer>
    <experiments>3</experiments>
</comment>
<comment type="interaction">
    <interactant intactId="EBI-621389">
        <id>P27694</id>
    </interactant>
    <interactant intactId="EBI-850026">
        <id>P09884</id>
        <label>POLA1</label>
    </interactant>
    <organismsDiffer>false</organismsDiffer>
    <experiments>2</experiments>
</comment>
<comment type="interaction">
    <interactant intactId="EBI-621389">
        <id>P27694</id>
    </interactant>
    <interactant intactId="EBI-10044038">
        <id>Q96LW4</id>
        <label>PRIMPOL</label>
    </interactant>
    <organismsDiffer>false</organismsDiffer>
    <experiments>7</experiments>
</comment>
<comment type="interaction">
    <interactant intactId="EBI-621389">
        <id>P27694</id>
    </interactant>
    <interactant intactId="EBI-621404">
        <id>P15927</id>
        <label>RPA2</label>
    </interactant>
    <organismsDiffer>false</organismsDiffer>
    <experiments>20</experiments>
</comment>
<comment type="interaction">
    <interactant intactId="EBI-621389">
        <id>P27694</id>
    </interactant>
    <interactant intactId="EBI-621428">
        <id>P35244</id>
        <label>RPA3</label>
    </interactant>
    <organismsDiffer>false</organismsDiffer>
    <experiments>11</experiments>
</comment>
<comment type="interaction">
    <interactant intactId="EBI-621389">
        <id>P27694</id>
    </interactant>
    <interactant intactId="EBI-2856301">
        <id>Q13156</id>
        <label>RPA4</label>
    </interactant>
    <organismsDiffer>false</organismsDiffer>
    <experiments>8</experiments>
</comment>
<comment type="interaction">
    <interactant intactId="EBI-621389">
        <id>P27694</id>
    </interactant>
    <interactant intactId="EBI-368417">
        <id>Q14191</id>
        <label>WRN</label>
    </interactant>
    <organismsDiffer>false</organismsDiffer>
    <experiments>9</experiments>
</comment>
<comment type="interaction">
    <interactant intactId="EBI-621389">
        <id>P27694</id>
    </interactant>
    <interactant intactId="EBI-617698">
        <id>P03070</id>
    </interactant>
    <organismsDiffer>true</organismsDiffer>
    <experiments>3</experiments>
</comment>
<comment type="subcellular location">
    <subcellularLocation>
        <location evidence="7 9">Nucleus</location>
    </subcellularLocation>
    <subcellularLocation>
        <location evidence="9">Nucleus</location>
        <location evidence="9">PML body</location>
    </subcellularLocation>
    <text evidence="9">Enriched in PML bodies in cells displaying alternative lengthening of their telomeres.</text>
</comment>
<comment type="PTM">
    <text evidence="15 18">DNA damage-induced 'Lys-63'-linked polyubiquitination by PRPF19 mediates ATRIP recruitment to the RPA complex at sites of DNA damage and activation of ATR (PubMed:24332808). Ubiquitinated by RFWD3 at stalled replication forks in response to DNA damage: ubiquitination by RFWD3 does not lead to degradation by the proteasome and promotes removal of the RPA complex from stalled replication forks, promoting homologous recombination (PubMed:26474068).</text>
</comment>
<comment type="PTM">
    <text evidence="12">Sumoylated on lysine residues Lys-449 and Lys-577, with Lys-449 being the major site. Sumoylation promotes recruitment of RAD51 to the DNA damage foci to initiate DNA repair through homologous recombination. Desumoylated by SENP6.</text>
</comment>
<comment type="PTM">
    <text evidence="16 25">Poly-ADP-ribosylated by PARP1; promoting recruitment of HTATSF1.</text>
</comment>
<comment type="disease" evidence="24">
    <disease id="DI-06355">
        <name>Pulmonary fibrosis, and/or bone marrow failure syndrome, telomere-related, 6</name>
        <acronym>PFBMFT6</acronym>
        <description>An autosomal dominant disease associated with shortened telomeres. Pulmonary fibrosis is the most common manifestation. Other manifestations include aplastic anemia due to bone marrow failure, hepatic fibrosis, and increased cancer risk, particularly myelodysplastic syndrome and acute myeloid leukemia. Phenotype, age at onset, and severity are determined by telomere length.</description>
        <dbReference type="MIM" id="619767"/>
    </disease>
    <text>The disease is caused by variants affecting the gene represented in this entry.</text>
</comment>
<comment type="similarity">
    <text evidence="36">Belongs to the replication factor A protein 1 family.</text>
</comment>
<comment type="sequence caution" evidence="36">
    <conflict type="erroneous initiation">
        <sequence resource="EMBL-CDS" id="BAD92969"/>
    </conflict>
    <text>Extended N-terminus.</text>
</comment>
<name>RFA1_HUMAN</name>
<organism>
    <name type="scientific">Homo sapiens</name>
    <name type="common">Human</name>
    <dbReference type="NCBI Taxonomy" id="9606"/>
    <lineage>
        <taxon>Eukaryota</taxon>
        <taxon>Metazoa</taxon>
        <taxon>Chordata</taxon>
        <taxon>Craniata</taxon>
        <taxon>Vertebrata</taxon>
        <taxon>Euteleostomi</taxon>
        <taxon>Mammalia</taxon>
        <taxon>Eutheria</taxon>
        <taxon>Euarchontoglires</taxon>
        <taxon>Primates</taxon>
        <taxon>Haplorrhini</taxon>
        <taxon>Catarrhini</taxon>
        <taxon>Hominidae</taxon>
        <taxon>Homo</taxon>
    </lineage>
</organism>
<protein>
    <recommendedName>
        <fullName>Replication protein A 70 kDa DNA-binding subunit</fullName>
        <shortName>RP-A p70</shortName>
    </recommendedName>
    <alternativeName>
        <fullName>Replication factor A protein 1</fullName>
        <shortName>RF-A protein 1</shortName>
    </alternativeName>
    <alternativeName>
        <fullName>Single-stranded DNA-binding protein</fullName>
    </alternativeName>
    <component>
        <recommendedName>
            <fullName>Replication protein A 70 kDa DNA-binding subunit, N-terminally processed</fullName>
        </recommendedName>
    </component>
</protein>
<feature type="chain" id="PRO_0000423231" description="Replication protein A 70 kDa DNA-binding subunit">
    <location>
        <begin position="1"/>
        <end position="616"/>
    </location>
</feature>
<feature type="initiator methionine" description="Removed; alternate" evidence="35">
    <location>
        <position position="1"/>
    </location>
</feature>
<feature type="chain" id="PRO_0000097260" description="Replication protein A 70 kDa DNA-binding subunit, N-terminally processed">
    <location>
        <begin position="2"/>
        <end position="616"/>
    </location>
</feature>
<feature type="DNA-binding region" description="OB">
    <location>
        <begin position="197"/>
        <end position="281"/>
    </location>
</feature>
<feature type="zinc finger region" description="C4-type" evidence="2">
    <location>
        <begin position="481"/>
        <end position="503"/>
    </location>
</feature>
<feature type="region of interest" description="Disordered" evidence="3">
    <location>
        <begin position="121"/>
        <end position="154"/>
    </location>
</feature>
<feature type="compositionally biased region" description="Low complexity" evidence="3">
    <location>
        <begin position="134"/>
        <end position="145"/>
    </location>
</feature>
<feature type="modified residue" description="N-acetylmethionine" evidence="40 43">
    <location>
        <position position="1"/>
    </location>
</feature>
<feature type="modified residue" description="N6-acetyllysine; alternate" evidence="41">
    <location>
        <position position="163"/>
    </location>
</feature>
<feature type="modified residue" description="N6-acetyllysine; alternate" evidence="41">
    <location>
        <position position="167"/>
    </location>
</feature>
<feature type="modified residue" description="Phosphothreonine" evidence="39 42">
    <location>
        <position position="180"/>
    </location>
</feature>
<feature type="modified residue" description="Phosphothreonine" evidence="42 44">
    <location>
        <position position="191"/>
    </location>
</feature>
<feature type="modified residue" description="N6-acetyllysine; alternate" evidence="41">
    <location>
        <position position="259"/>
    </location>
</feature>
<feature type="modified residue" description="Phosphoserine" evidence="42 44">
    <location>
        <position position="384"/>
    </location>
</feature>
<feature type="cross-link" description="Glycyl lysine isopeptide (Lys-Gly) (interchain with G-Cter in ubiquitin)" evidence="18">
    <location>
        <position position="22"/>
    </location>
</feature>
<feature type="cross-link" description="Glycyl lysine isopeptide (Lys-Gly) (interchain with G-Cter in ubiquitin)" evidence="18">
    <location>
        <position position="88"/>
    </location>
</feature>
<feature type="cross-link" description="Glycyl lysine isopeptide (Lys-Gly) (interchain with G-Cter in ubiquitin); alternate" evidence="18">
    <location>
        <position position="163"/>
    </location>
</feature>
<feature type="cross-link" description="Glycyl lysine isopeptide (Lys-Gly) (interchain with G-Cter in ubiquitin); alternate" evidence="18">
    <location>
        <position position="167"/>
    </location>
</feature>
<feature type="cross-link" description="Glycyl lysine isopeptide (Lys-Gly) (interchain with G-Cter in ubiquitin)" evidence="18">
    <location>
        <position position="183"/>
    </location>
</feature>
<feature type="cross-link" description="Glycyl lysine isopeptide (Lys-Gly) (interchain with G-Cter in ubiquitin)" evidence="18">
    <location>
        <position position="220"/>
    </location>
</feature>
<feature type="cross-link" description="Glycyl lysine isopeptide (Lys-Gly) (interchain with G-Cter in ubiquitin)" evidence="18">
    <location>
        <position position="244"/>
    </location>
</feature>
<feature type="cross-link" description="Glycyl lysine isopeptide (Lys-Gly) (interchain with G-Cter in ubiquitin); alternate" evidence="18">
    <location>
        <position position="259"/>
    </location>
</feature>
<feature type="cross-link" description="Glycyl lysine isopeptide (Lys-Gly) (interchain with G-Cter in ubiquitin)" evidence="18">
    <location>
        <position position="267"/>
    </location>
</feature>
<feature type="cross-link" description="Glycyl lysine isopeptide (Lys-Gly) (interchain with G-Cter in ubiquitin)" evidence="18">
    <location>
        <position position="331"/>
    </location>
</feature>
<feature type="cross-link" description="Glycyl lysine isopeptide (Lys-Gly) (interchain with G-Cter in ubiquitin)" evidence="18">
    <location>
        <position position="410"/>
    </location>
</feature>
<feature type="cross-link" description="Glycyl lysine isopeptide (Lys-Gly) (interchain with G-Cter in ubiquitin)" evidence="18">
    <location>
        <position position="431"/>
    </location>
</feature>
<feature type="cross-link" description="Glycyl lysine isopeptide (Lys-Gly) (interchain with G-Cter in SUMO)" evidence="12">
    <location>
        <position position="449"/>
    </location>
</feature>
<feature type="cross-link" description="Glycyl lysine isopeptide (Lys-Gly) (interchain with G-Cter in ubiquitin)" evidence="18">
    <location>
        <position position="458"/>
    </location>
</feature>
<feature type="cross-link" description="Glycyl lysine isopeptide (Lys-Gly) (interchain with G-Cter in ubiquitin)" evidence="18">
    <location>
        <position position="553"/>
    </location>
</feature>
<feature type="cross-link" description="Glycyl lysine isopeptide (Lys-Gly) (interchain with G-Cter in SUMO)" evidence="12">
    <location>
        <position position="577"/>
    </location>
</feature>
<feature type="sequence variant" id="VAR_086965" description="In PFBMFT6; uncertain significance; increased single-stranded DNA binding; increased telomeric DNA binding; has no effect on the formation of canonical replication protein A complex; dbSNP:rs570041689." evidence="24">
    <original>V</original>
    <variation>A</variation>
    <location>
        <position position="227"/>
    </location>
</feature>
<feature type="sequence variant" id="VAR_086966" description="In PFBMFT6; results in shortened telomeres and impaired hematopoiesis when expressed in iPSC-derived hematopoietic cells; increased single-stranded DNA binding; increased telomeric DNA binding; has no effect on the formation of canonical replication protein A complex; dbSNP:rs916648829." evidence="24">
    <original>E</original>
    <variation>K</variation>
    <location>
        <position position="240"/>
    </location>
</feature>
<feature type="sequence variant" id="VAR_086967" description="In PFBMFT6; uncertain significance; has DNA-binding properties similar to the wild-type; has no effect on the formation of canonical replication protein A complex; dbSNP:rs2151286956." evidence="24">
    <original>T</original>
    <variation>A</variation>
    <location>
        <position position="270"/>
    </location>
</feature>
<feature type="sequence variant" id="VAR_019236" description="In dbSNP:rs5030755." evidence="33 34">
    <original>T</original>
    <variation>A</variation>
    <location>
        <position position="351"/>
    </location>
</feature>
<feature type="mutagenesis site" description="Loss of HELB-binding; when associated with E-43." evidence="13">
    <original>R</original>
    <variation>E</variation>
    <location>
        <position position="41"/>
    </location>
</feature>
<feature type="mutagenesis site" description="Loss of HELB-binding; when associated with E-41." evidence="13">
    <original>R</original>
    <variation>E</variation>
    <location>
        <position position="43"/>
    </location>
</feature>
<feature type="mutagenesis site" description="Significant reduction of sumoylation. Loss of sumoylation; when associated with R-577." evidence="12">
    <original>K</original>
    <variation>R</variation>
    <location>
        <position position="449"/>
    </location>
</feature>
<feature type="mutagenesis site" description="Loss of function in DNA replication and mismatch repair without effect on DNA-binding activity; when associated with S-503." evidence="30">
    <original>C</original>
    <variation>S</variation>
    <location>
        <position position="500"/>
    </location>
</feature>
<feature type="mutagenesis site" description="Loss of function in DNA replication and mismatch repair without effect on DNA-binding activity; when associated with S-500." evidence="30">
    <original>C</original>
    <variation>S</variation>
    <location>
        <position position="503"/>
    </location>
</feature>
<feature type="mutagenesis site" description="Slight sumoylation decrease. Loss of sumoylation; when associated with R-449." evidence="12">
    <original>K</original>
    <variation>R</variation>
    <location>
        <position position="577"/>
    </location>
</feature>
<feature type="helix" evidence="49">
    <location>
        <begin position="2"/>
        <end position="4"/>
    </location>
</feature>
<feature type="helix" evidence="49">
    <location>
        <begin position="9"/>
        <end position="14"/>
    </location>
</feature>
<feature type="turn" evidence="45">
    <location>
        <begin position="15"/>
        <end position="17"/>
    </location>
</feature>
<feature type="strand" evidence="45">
    <location>
        <begin position="18"/>
        <end position="20"/>
    </location>
</feature>
<feature type="strand" evidence="49">
    <location>
        <begin position="24"/>
        <end position="32"/>
    </location>
</feature>
<feature type="strand" evidence="49">
    <location>
        <begin position="36"/>
        <end position="38"/>
    </location>
</feature>
<feature type="strand" evidence="49">
    <location>
        <begin position="42"/>
        <end position="47"/>
    </location>
</feature>
<feature type="strand" evidence="49">
    <location>
        <begin position="49"/>
        <end position="58"/>
    </location>
</feature>
<feature type="helix" evidence="49">
    <location>
        <begin position="60"/>
        <end position="62"/>
    </location>
</feature>
<feature type="helix" evidence="49">
    <location>
        <begin position="63"/>
        <end position="67"/>
    </location>
</feature>
<feature type="strand" evidence="45">
    <location>
        <begin position="70"/>
        <end position="74"/>
    </location>
</feature>
<feature type="strand" evidence="49">
    <location>
        <begin position="76"/>
        <end position="86"/>
    </location>
</feature>
<feature type="strand" evidence="48">
    <location>
        <begin position="88"/>
        <end position="90"/>
    </location>
</feature>
<feature type="strand" evidence="49">
    <location>
        <begin position="92"/>
        <end position="103"/>
    </location>
</feature>
<feature type="helix" evidence="49">
    <location>
        <begin position="105"/>
        <end position="108"/>
    </location>
</feature>
<feature type="strand" evidence="50">
    <location>
        <begin position="116"/>
        <end position="119"/>
    </location>
</feature>
<feature type="helix" evidence="46">
    <location>
        <begin position="187"/>
        <end position="189"/>
    </location>
</feature>
<feature type="strand" evidence="46">
    <location>
        <begin position="198"/>
        <end position="206"/>
    </location>
</feature>
<feature type="strand" evidence="46">
    <location>
        <begin position="210"/>
        <end position="213"/>
    </location>
</feature>
<feature type="strand" evidence="46">
    <location>
        <begin position="218"/>
        <end position="227"/>
    </location>
</feature>
<feature type="strand" evidence="46">
    <location>
        <begin position="232"/>
        <end position="238"/>
    </location>
</feature>
<feature type="helix" evidence="46">
    <location>
        <begin position="239"/>
        <end position="245"/>
    </location>
</feature>
<feature type="helix" evidence="46">
    <location>
        <begin position="246"/>
        <end position="248"/>
    </location>
</feature>
<feature type="strand" evidence="46">
    <location>
        <begin position="254"/>
        <end position="258"/>
    </location>
</feature>
<feature type="strand" evidence="46">
    <location>
        <begin position="261"/>
        <end position="264"/>
    </location>
</feature>
<feature type="helix" evidence="46">
    <location>
        <begin position="267"/>
        <end position="269"/>
    </location>
</feature>
<feature type="strand" evidence="46">
    <location>
        <begin position="275"/>
        <end position="279"/>
    </location>
</feature>
<feature type="strand" evidence="46">
    <location>
        <begin position="285"/>
        <end position="288"/>
    </location>
</feature>
<feature type="helix" evidence="46">
    <location>
        <begin position="305"/>
        <end position="310"/>
    </location>
</feature>
<feature type="strand" evidence="46">
    <location>
        <begin position="316"/>
        <end position="326"/>
    </location>
</feature>
<feature type="strand" evidence="46">
    <location>
        <begin position="330"/>
        <end position="334"/>
    </location>
</feature>
<feature type="turn" evidence="46">
    <location>
        <begin position="335"/>
        <end position="338"/>
    </location>
</feature>
<feature type="strand" evidence="46">
    <location>
        <begin position="339"/>
        <end position="349"/>
    </location>
</feature>
<feature type="strand" evidence="46">
    <location>
        <begin position="355"/>
        <end position="361"/>
    </location>
</feature>
<feature type="helix" evidence="46">
    <location>
        <begin position="362"/>
        <end position="367"/>
    </location>
</feature>
<feature type="strand" evidence="46">
    <location>
        <begin position="375"/>
        <end position="384"/>
    </location>
</feature>
<feature type="strand" evidence="46">
    <location>
        <begin position="388"/>
        <end position="392"/>
    </location>
</feature>
<feature type="strand" evidence="46">
    <location>
        <begin position="398"/>
        <end position="402"/>
    </location>
</feature>
<feature type="helix" evidence="46">
    <location>
        <begin position="406"/>
        <end position="416"/>
    </location>
</feature>
<feature type="turn" evidence="46">
    <location>
        <begin position="417"/>
        <end position="419"/>
    </location>
</feature>
<feature type="helix" evidence="47">
    <location>
        <begin position="445"/>
        <end position="451"/>
    </location>
</feature>
<feature type="turn" evidence="47">
    <location>
        <begin position="452"/>
        <end position="454"/>
    </location>
</feature>
<feature type="strand" evidence="47">
    <location>
        <begin position="455"/>
        <end position="458"/>
    </location>
</feature>
<feature type="strand" evidence="47">
    <location>
        <begin position="460"/>
        <end position="471"/>
    </location>
</feature>
<feature type="strand" evidence="47">
    <location>
        <begin position="477"/>
        <end position="480"/>
    </location>
</feature>
<feature type="strand" evidence="51">
    <location>
        <begin position="482"/>
        <end position="484"/>
    </location>
</feature>
<feature type="strand" evidence="47">
    <location>
        <begin position="491"/>
        <end position="493"/>
    </location>
</feature>
<feature type="turn" evidence="47">
    <location>
        <begin position="494"/>
        <end position="496"/>
    </location>
</feature>
<feature type="strand" evidence="47">
    <location>
        <begin position="497"/>
        <end position="500"/>
    </location>
</feature>
<feature type="turn" evidence="47">
    <location>
        <begin position="501"/>
        <end position="504"/>
    </location>
</feature>
<feature type="strand" evidence="47">
    <location>
        <begin position="505"/>
        <end position="509"/>
    </location>
</feature>
<feature type="strand" evidence="47">
    <location>
        <begin position="512"/>
        <end position="521"/>
    </location>
</feature>
<feature type="strand" evidence="47">
    <location>
        <begin position="526"/>
        <end position="532"/>
    </location>
</feature>
<feature type="helix" evidence="47">
    <location>
        <begin position="533"/>
        <end position="540"/>
    </location>
</feature>
<feature type="helix" evidence="47">
    <location>
        <begin position="544"/>
        <end position="550"/>
    </location>
</feature>
<feature type="helix" evidence="47">
    <location>
        <begin position="555"/>
        <end position="564"/>
    </location>
</feature>
<feature type="turn" evidence="47">
    <location>
        <begin position="565"/>
        <end position="567"/>
    </location>
</feature>
<feature type="strand" evidence="47">
    <location>
        <begin position="569"/>
        <end position="577"/>
    </location>
</feature>
<feature type="strand" evidence="47">
    <location>
        <begin position="588"/>
        <end position="596"/>
    </location>
</feature>
<feature type="helix" evidence="47">
    <location>
        <begin position="599"/>
        <end position="615"/>
    </location>
</feature>
<dbReference type="EMBL" id="M63488">
    <property type="protein sequence ID" value="AAA36584.1"/>
    <property type="molecule type" value="mRNA"/>
</dbReference>
<dbReference type="EMBL" id="AK289704">
    <property type="protein sequence ID" value="BAF82393.1"/>
    <property type="molecule type" value="mRNA"/>
</dbReference>
<dbReference type="EMBL" id="AB209732">
    <property type="protein sequence ID" value="BAD92969.1"/>
    <property type="status" value="ALT_INIT"/>
    <property type="molecule type" value="mRNA"/>
</dbReference>
<dbReference type="EMBL" id="AY599563">
    <property type="protein sequence ID" value="AAS94324.1"/>
    <property type="molecule type" value="Genomic_DNA"/>
</dbReference>
<dbReference type="EMBL" id="CH471108">
    <property type="protein sequence ID" value="EAW90574.1"/>
    <property type="molecule type" value="Genomic_DNA"/>
</dbReference>
<dbReference type="EMBL" id="BC018126">
    <property type="protein sequence ID" value="AAH18126.1"/>
    <property type="molecule type" value="mRNA"/>
</dbReference>
<dbReference type="CCDS" id="CCDS11014.1"/>
<dbReference type="PIR" id="A40457">
    <property type="entry name" value="A40457"/>
</dbReference>
<dbReference type="RefSeq" id="NP_002936.1">
    <property type="nucleotide sequence ID" value="NM_002945.5"/>
</dbReference>
<dbReference type="PDB" id="1EWI">
    <property type="method" value="NMR"/>
    <property type="chains" value="A=1-114"/>
</dbReference>
<dbReference type="PDB" id="1FGU">
    <property type="method" value="X-ray"/>
    <property type="resolution" value="2.50 A"/>
    <property type="chains" value="A/B=182-432"/>
</dbReference>
<dbReference type="PDB" id="1JMC">
    <property type="method" value="X-ray"/>
    <property type="resolution" value="2.40 A"/>
    <property type="chains" value="A=181-422"/>
</dbReference>
<dbReference type="PDB" id="1L1O">
    <property type="method" value="X-ray"/>
    <property type="resolution" value="2.80 A"/>
    <property type="chains" value="C/F=436-616"/>
</dbReference>
<dbReference type="PDB" id="2B29">
    <property type="method" value="X-ray"/>
    <property type="resolution" value="1.60 A"/>
    <property type="chains" value="A=1-120"/>
</dbReference>
<dbReference type="PDB" id="2B3G">
    <property type="method" value="X-ray"/>
    <property type="resolution" value="1.60 A"/>
    <property type="chains" value="A=1-120"/>
</dbReference>
<dbReference type="PDB" id="4IJH">
    <property type="method" value="X-ray"/>
    <property type="resolution" value="1.50 A"/>
    <property type="chains" value="A=1-120"/>
</dbReference>
<dbReference type="PDB" id="4IJL">
    <property type="method" value="X-ray"/>
    <property type="resolution" value="1.70 A"/>
    <property type="chains" value="A=1-120"/>
</dbReference>
<dbReference type="PDB" id="4IPC">
    <property type="method" value="X-ray"/>
    <property type="resolution" value="1.22 A"/>
    <property type="chains" value="A=1-120"/>
</dbReference>
<dbReference type="PDB" id="4IPD">
    <property type="method" value="X-ray"/>
    <property type="resolution" value="1.51 A"/>
    <property type="chains" value="A=1-120"/>
</dbReference>
<dbReference type="PDB" id="4IPG">
    <property type="method" value="X-ray"/>
    <property type="resolution" value="1.58 A"/>
    <property type="chains" value="A=1-120"/>
</dbReference>
<dbReference type="PDB" id="4IPH">
    <property type="method" value="X-ray"/>
    <property type="resolution" value="1.94 A"/>
    <property type="chains" value="A=1-120"/>
</dbReference>
<dbReference type="PDB" id="4LUO">
    <property type="method" value="X-ray"/>
    <property type="resolution" value="1.54 A"/>
    <property type="chains" value="A=1-120"/>
</dbReference>
<dbReference type="PDB" id="4LUV">
    <property type="method" value="X-ray"/>
    <property type="resolution" value="1.40 A"/>
    <property type="chains" value="A=1-120"/>
</dbReference>
<dbReference type="PDB" id="4LUZ">
    <property type="method" value="X-ray"/>
    <property type="resolution" value="1.90 A"/>
    <property type="chains" value="A=1-120"/>
</dbReference>
<dbReference type="PDB" id="4LW1">
    <property type="method" value="X-ray"/>
    <property type="resolution" value="1.63 A"/>
    <property type="chains" value="A=1-120"/>
</dbReference>
<dbReference type="PDB" id="4LWC">
    <property type="method" value="X-ray"/>
    <property type="resolution" value="1.61 A"/>
    <property type="chains" value="A=1-120"/>
</dbReference>
<dbReference type="PDB" id="4NB3">
    <property type="method" value="X-ray"/>
    <property type="resolution" value="1.35 A"/>
    <property type="chains" value="A/B=1-120"/>
</dbReference>
<dbReference type="PDB" id="4O0A">
    <property type="method" value="X-ray"/>
    <property type="resolution" value="1.20 A"/>
    <property type="chains" value="A=1-120"/>
</dbReference>
<dbReference type="PDB" id="4R4C">
    <property type="method" value="X-ray"/>
    <property type="resolution" value="1.40 A"/>
    <property type="chains" value="A=1-120"/>
</dbReference>
<dbReference type="PDB" id="4R4I">
    <property type="method" value="X-ray"/>
    <property type="resolution" value="1.40 A"/>
    <property type="chains" value="A=1-120"/>
</dbReference>
<dbReference type="PDB" id="4R4O">
    <property type="method" value="X-ray"/>
    <property type="resolution" value="1.33 A"/>
    <property type="chains" value="A=1-120"/>
</dbReference>
<dbReference type="PDB" id="4R4Q">
    <property type="method" value="X-ray"/>
    <property type="resolution" value="1.35 A"/>
    <property type="chains" value="A=1-120"/>
</dbReference>
<dbReference type="PDB" id="4R4T">
    <property type="method" value="X-ray"/>
    <property type="resolution" value="1.28 A"/>
    <property type="chains" value="A=1-120"/>
</dbReference>
<dbReference type="PDB" id="5E7N">
    <property type="method" value="X-ray"/>
    <property type="resolution" value="1.21 A"/>
    <property type="chains" value="A=1-120"/>
</dbReference>
<dbReference type="PDB" id="5EAY">
    <property type="method" value="X-ray"/>
    <property type="resolution" value="1.55 A"/>
    <property type="chains" value="A/B/C/D=3-120"/>
</dbReference>
<dbReference type="PDB" id="5N85">
    <property type="method" value="X-ray"/>
    <property type="resolution" value="2.00 A"/>
    <property type="chains" value="A=1-120"/>
</dbReference>
<dbReference type="PDB" id="5N8A">
    <property type="method" value="X-ray"/>
    <property type="resolution" value="1.28 A"/>
    <property type="chains" value="A=1-120"/>
</dbReference>
<dbReference type="PDB" id="7XUT">
    <property type="method" value="X-ray"/>
    <property type="resolution" value="1.60 A"/>
    <property type="chains" value="A/B=1-121"/>
</dbReference>
<dbReference type="PDB" id="7XUV">
    <property type="method" value="X-ray"/>
    <property type="resolution" value="1.60 A"/>
    <property type="chains" value="A=1-120"/>
</dbReference>
<dbReference type="PDB" id="7XUW">
    <property type="method" value="X-ray"/>
    <property type="resolution" value="1.80 A"/>
    <property type="chains" value="A=1-121"/>
</dbReference>
<dbReference type="PDB" id="7XV0">
    <property type="method" value="X-ray"/>
    <property type="resolution" value="1.50 A"/>
    <property type="chains" value="A=1-121"/>
</dbReference>
<dbReference type="PDB" id="7XV1">
    <property type="method" value="X-ray"/>
    <property type="resolution" value="1.80 A"/>
    <property type="chains" value="A=1-120"/>
</dbReference>
<dbReference type="PDB" id="7XV4">
    <property type="method" value="X-ray"/>
    <property type="resolution" value="1.60 A"/>
    <property type="chains" value="A=1-120"/>
</dbReference>
<dbReference type="PDB" id="8JZV">
    <property type="method" value="X-ray"/>
    <property type="resolution" value="1.50 A"/>
    <property type="chains" value="A=1-120"/>
</dbReference>
<dbReference type="PDB" id="8JZY">
    <property type="method" value="X-ray"/>
    <property type="resolution" value="1.50 A"/>
    <property type="chains" value="A=1-120"/>
</dbReference>
<dbReference type="PDB" id="8K00">
    <property type="method" value="X-ray"/>
    <property type="resolution" value="1.40 A"/>
    <property type="chains" value="A=1-120"/>
</dbReference>
<dbReference type="PDB" id="8RK2">
    <property type="method" value="EM"/>
    <property type="resolution" value="3.20 A"/>
    <property type="chains" value="A=1-616"/>
</dbReference>
<dbReference type="PDB" id="9J1S">
    <property type="method" value="X-ray"/>
    <property type="resolution" value="1.55 A"/>
    <property type="chains" value="A=1-120"/>
</dbReference>
<dbReference type="PDB" id="9MJ5">
    <property type="method" value="EM"/>
    <property type="resolution" value="3.50 A"/>
    <property type="chains" value="C=438-616"/>
</dbReference>
<dbReference type="PDBsum" id="1EWI"/>
<dbReference type="PDBsum" id="1FGU"/>
<dbReference type="PDBsum" id="1JMC"/>
<dbReference type="PDBsum" id="1L1O"/>
<dbReference type="PDBsum" id="2B29"/>
<dbReference type="PDBsum" id="2B3G"/>
<dbReference type="PDBsum" id="4IJH"/>
<dbReference type="PDBsum" id="4IJL"/>
<dbReference type="PDBsum" id="4IPC"/>
<dbReference type="PDBsum" id="4IPD"/>
<dbReference type="PDBsum" id="4IPG"/>
<dbReference type="PDBsum" id="4IPH"/>
<dbReference type="PDBsum" id="4LUO"/>
<dbReference type="PDBsum" id="4LUV"/>
<dbReference type="PDBsum" id="4LUZ"/>
<dbReference type="PDBsum" id="4LW1"/>
<dbReference type="PDBsum" id="4LWC"/>
<dbReference type="PDBsum" id="4NB3"/>
<dbReference type="PDBsum" id="4O0A"/>
<dbReference type="PDBsum" id="4R4C"/>
<dbReference type="PDBsum" id="4R4I"/>
<dbReference type="PDBsum" id="4R4O"/>
<dbReference type="PDBsum" id="4R4Q"/>
<dbReference type="PDBsum" id="4R4T"/>
<dbReference type="PDBsum" id="5E7N"/>
<dbReference type="PDBsum" id="5EAY"/>
<dbReference type="PDBsum" id="5N85"/>
<dbReference type="PDBsum" id="5N8A"/>
<dbReference type="PDBsum" id="7XUT"/>
<dbReference type="PDBsum" id="7XUV"/>
<dbReference type="PDBsum" id="7XUW"/>
<dbReference type="PDBsum" id="7XV0"/>
<dbReference type="PDBsum" id="7XV1"/>
<dbReference type="PDBsum" id="7XV4"/>
<dbReference type="PDBsum" id="8JZV"/>
<dbReference type="PDBsum" id="8JZY"/>
<dbReference type="PDBsum" id="8K00"/>
<dbReference type="PDBsum" id="8RK2"/>
<dbReference type="PDBsum" id="9J1S"/>
<dbReference type="PDBsum" id="9MJ5"/>
<dbReference type="BMRB" id="P27694"/>
<dbReference type="EMDB" id="EMD-19255"/>
<dbReference type="EMDB" id="EMD-48312"/>
<dbReference type="SASBDB" id="P27694"/>
<dbReference type="SMR" id="P27694"/>
<dbReference type="BioGRID" id="112037">
    <property type="interactions" value="3062"/>
</dbReference>
<dbReference type="ComplexPortal" id="CPX-1878">
    <property type="entry name" value="Replication protein A complex, RPA2 variant"/>
</dbReference>
<dbReference type="ComplexPortal" id="CPX-1879">
    <property type="entry name" value="Replication protein A complex, RPA4 variant"/>
</dbReference>
<dbReference type="CORUM" id="P27694"/>
<dbReference type="DIP" id="DIP-24189N"/>
<dbReference type="FunCoup" id="P27694">
    <property type="interactions" value="3172"/>
</dbReference>
<dbReference type="IntAct" id="P27694">
    <property type="interactions" value="125"/>
</dbReference>
<dbReference type="MINT" id="P27694"/>
<dbReference type="STRING" id="9606.ENSP00000254719"/>
<dbReference type="BindingDB" id="P27694"/>
<dbReference type="ChEMBL" id="CHEMBL1764940"/>
<dbReference type="GlyCosmos" id="P27694">
    <property type="glycosylation" value="1 site, 1 glycan"/>
</dbReference>
<dbReference type="GlyGen" id="P27694">
    <property type="glycosylation" value="2 sites, 1 O-linked glycan (2 sites)"/>
</dbReference>
<dbReference type="iPTMnet" id="P27694"/>
<dbReference type="MetOSite" id="P27694"/>
<dbReference type="PhosphoSitePlus" id="P27694"/>
<dbReference type="SwissPalm" id="P27694"/>
<dbReference type="BioMuta" id="RPA1"/>
<dbReference type="DMDM" id="1350579"/>
<dbReference type="jPOST" id="P27694"/>
<dbReference type="MassIVE" id="P27694"/>
<dbReference type="PaxDb" id="9606-ENSP00000254719"/>
<dbReference type="PeptideAtlas" id="P27694"/>
<dbReference type="ProteomicsDB" id="54405"/>
<dbReference type="Pumba" id="P27694"/>
<dbReference type="Antibodypedia" id="1868">
    <property type="antibodies" value="497 antibodies from 40 providers"/>
</dbReference>
<dbReference type="CPTC" id="P27694">
    <property type="antibodies" value="1 antibody"/>
</dbReference>
<dbReference type="DNASU" id="6117"/>
<dbReference type="Ensembl" id="ENST00000254719.10">
    <property type="protein sequence ID" value="ENSP00000254719.4"/>
    <property type="gene ID" value="ENSG00000132383.12"/>
</dbReference>
<dbReference type="GeneID" id="6117"/>
<dbReference type="KEGG" id="hsa:6117"/>
<dbReference type="MANE-Select" id="ENST00000254719.10">
    <property type="protein sequence ID" value="ENSP00000254719.4"/>
    <property type="RefSeq nucleotide sequence ID" value="NM_002945.5"/>
    <property type="RefSeq protein sequence ID" value="NP_002936.1"/>
</dbReference>
<dbReference type="UCSC" id="uc002fto.3">
    <property type="organism name" value="human"/>
</dbReference>
<dbReference type="AGR" id="HGNC:10289"/>
<dbReference type="CTD" id="6117"/>
<dbReference type="DisGeNET" id="6117"/>
<dbReference type="GeneCards" id="RPA1"/>
<dbReference type="GeneReviews" id="RPA1"/>
<dbReference type="HGNC" id="HGNC:10289">
    <property type="gene designation" value="RPA1"/>
</dbReference>
<dbReference type="HPA" id="ENSG00000132383">
    <property type="expression patterns" value="Low tissue specificity"/>
</dbReference>
<dbReference type="MalaCards" id="RPA1"/>
<dbReference type="MIM" id="179835">
    <property type="type" value="gene"/>
</dbReference>
<dbReference type="MIM" id="619767">
    <property type="type" value="phenotype"/>
</dbReference>
<dbReference type="neXtProt" id="NX_P27694"/>
<dbReference type="OpenTargets" id="ENSG00000132383"/>
<dbReference type="PharmGKB" id="PA34651"/>
<dbReference type="VEuPathDB" id="HostDB:ENSG00000132383"/>
<dbReference type="eggNOG" id="KOG0851">
    <property type="taxonomic scope" value="Eukaryota"/>
</dbReference>
<dbReference type="GeneTree" id="ENSGT00390000012403"/>
<dbReference type="HOGENOM" id="CLU_012393_2_1_1"/>
<dbReference type="InParanoid" id="P27694"/>
<dbReference type="OMA" id="DQCDAFY"/>
<dbReference type="OrthoDB" id="1751331at2759"/>
<dbReference type="PAN-GO" id="P27694">
    <property type="GO annotations" value="8 GO annotations based on evolutionary models"/>
</dbReference>
<dbReference type="PhylomeDB" id="P27694"/>
<dbReference type="TreeFam" id="TF105241"/>
<dbReference type="PathwayCommons" id="P27694"/>
<dbReference type="Reactome" id="R-HSA-110312">
    <property type="pathway name" value="Translesion synthesis by REV1"/>
</dbReference>
<dbReference type="Reactome" id="R-HSA-110314">
    <property type="pathway name" value="Recognition of DNA damage by PCNA-containing replication complex"/>
</dbReference>
<dbReference type="Reactome" id="R-HSA-110320">
    <property type="pathway name" value="Translesion Synthesis by POLH"/>
</dbReference>
<dbReference type="Reactome" id="R-HSA-174437">
    <property type="pathway name" value="Removal of the Flap Intermediate from the C-strand"/>
</dbReference>
<dbReference type="Reactome" id="R-HSA-176187">
    <property type="pathway name" value="Activation of ATR in response to replication stress"/>
</dbReference>
<dbReference type="Reactome" id="R-HSA-3108214">
    <property type="pathway name" value="SUMOylation of DNA damage response and repair proteins"/>
</dbReference>
<dbReference type="Reactome" id="R-HSA-3371453">
    <property type="pathway name" value="Regulation of HSF1-mediated heat shock response"/>
</dbReference>
<dbReference type="Reactome" id="R-HSA-3371511">
    <property type="pathway name" value="HSF1 activation"/>
</dbReference>
<dbReference type="Reactome" id="R-HSA-5358565">
    <property type="pathway name" value="Mismatch repair (MMR) directed by MSH2:MSH6 (MutSalpha)"/>
</dbReference>
<dbReference type="Reactome" id="R-HSA-5358606">
    <property type="pathway name" value="Mismatch repair (MMR) directed by MSH2:MSH3 (MutSbeta)"/>
</dbReference>
<dbReference type="Reactome" id="R-HSA-5651801">
    <property type="pathway name" value="PCNA-Dependent Long Patch Base Excision Repair"/>
</dbReference>
<dbReference type="Reactome" id="R-HSA-5655862">
    <property type="pathway name" value="Translesion synthesis by POLK"/>
</dbReference>
<dbReference type="Reactome" id="R-HSA-5656121">
    <property type="pathway name" value="Translesion synthesis by POLI"/>
</dbReference>
<dbReference type="Reactome" id="R-HSA-5656169">
    <property type="pathway name" value="Termination of translesion DNA synthesis"/>
</dbReference>
<dbReference type="Reactome" id="R-HSA-5685938">
    <property type="pathway name" value="HDR through Single Strand Annealing (SSA)"/>
</dbReference>
<dbReference type="Reactome" id="R-HSA-5685942">
    <property type="pathway name" value="HDR through Homologous Recombination (HRR)"/>
</dbReference>
<dbReference type="Reactome" id="R-HSA-5693607">
    <property type="pathway name" value="Processing of DNA double-strand break ends"/>
</dbReference>
<dbReference type="Reactome" id="R-HSA-5693616">
    <property type="pathway name" value="Presynaptic phase of homologous DNA pairing and strand exchange"/>
</dbReference>
<dbReference type="Reactome" id="R-HSA-5696395">
    <property type="pathway name" value="Formation of Incision Complex in GG-NER"/>
</dbReference>
<dbReference type="Reactome" id="R-HSA-5696397">
    <property type="pathway name" value="Gap-filling DNA repair synthesis and ligation in GG-NER"/>
</dbReference>
<dbReference type="Reactome" id="R-HSA-5696400">
    <property type="pathway name" value="Dual Incision in GG-NER"/>
</dbReference>
<dbReference type="Reactome" id="R-HSA-6782135">
    <property type="pathway name" value="Dual incision in TC-NER"/>
</dbReference>
<dbReference type="Reactome" id="R-HSA-6782210">
    <property type="pathway name" value="Gap-filling DNA repair synthesis and ligation in TC-NER"/>
</dbReference>
<dbReference type="Reactome" id="R-HSA-6783310">
    <property type="pathway name" value="Fanconi Anemia Pathway"/>
</dbReference>
<dbReference type="Reactome" id="R-HSA-6804756">
    <property type="pathway name" value="Regulation of TP53 Activity through Phosphorylation"/>
</dbReference>
<dbReference type="Reactome" id="R-HSA-68962">
    <property type="pathway name" value="Activation of the pre-replicative complex"/>
</dbReference>
<dbReference type="Reactome" id="R-HSA-69166">
    <property type="pathway name" value="Removal of the Flap Intermediate"/>
</dbReference>
<dbReference type="Reactome" id="R-HSA-69473">
    <property type="pathway name" value="G2/M DNA damage checkpoint"/>
</dbReference>
<dbReference type="Reactome" id="R-HSA-912446">
    <property type="pathway name" value="Meiotic recombination"/>
</dbReference>
<dbReference type="Reactome" id="R-HSA-9709570">
    <property type="pathway name" value="Impaired BRCA2 binding to RAD51"/>
</dbReference>
<dbReference type="SignaLink" id="P27694"/>
<dbReference type="SIGNOR" id="P27694"/>
<dbReference type="BioGRID-ORCS" id="6117">
    <property type="hits" value="838 hits in 1165 CRISPR screens"/>
</dbReference>
<dbReference type="CD-CODE" id="B5B9A610">
    <property type="entry name" value="PML body"/>
</dbReference>
<dbReference type="ChiTaRS" id="RPA1">
    <property type="organism name" value="human"/>
</dbReference>
<dbReference type="EvolutionaryTrace" id="P27694"/>
<dbReference type="GeneWiki" id="Replication_protein_A1"/>
<dbReference type="GenomeRNAi" id="6117"/>
<dbReference type="Pharos" id="P27694">
    <property type="development level" value="Tchem"/>
</dbReference>
<dbReference type="PRO" id="PR:P27694"/>
<dbReference type="Proteomes" id="UP000005640">
    <property type="component" value="Chromosome 17"/>
</dbReference>
<dbReference type="RNAct" id="P27694">
    <property type="molecule type" value="protein"/>
</dbReference>
<dbReference type="Bgee" id="ENSG00000132383">
    <property type="expression patterns" value="Expressed in secondary oocyte and 206 other cell types or tissues"/>
</dbReference>
<dbReference type="ExpressionAtlas" id="P27694">
    <property type="expression patterns" value="baseline and differential"/>
</dbReference>
<dbReference type="GO" id="GO:0000781">
    <property type="term" value="C:chromosome, telomeric region"/>
    <property type="evidence" value="ECO:0007005"/>
    <property type="project" value="BHF-UCL"/>
</dbReference>
<dbReference type="GO" id="GO:0005662">
    <property type="term" value="C:DNA replication factor A complex"/>
    <property type="evidence" value="ECO:0000314"/>
    <property type="project" value="UniProtKB"/>
</dbReference>
<dbReference type="GO" id="GO:0000800">
    <property type="term" value="C:lateral element"/>
    <property type="evidence" value="ECO:0007669"/>
    <property type="project" value="Ensembl"/>
</dbReference>
<dbReference type="GO" id="GO:0001673">
    <property type="term" value="C:male germ cell nucleus"/>
    <property type="evidence" value="ECO:0007669"/>
    <property type="project" value="Ensembl"/>
</dbReference>
<dbReference type="GO" id="GO:0005654">
    <property type="term" value="C:nucleoplasm"/>
    <property type="evidence" value="ECO:0000314"/>
    <property type="project" value="HPA"/>
</dbReference>
<dbReference type="GO" id="GO:0005634">
    <property type="term" value="C:nucleus"/>
    <property type="evidence" value="ECO:0000314"/>
    <property type="project" value="UniProtKB"/>
</dbReference>
<dbReference type="GO" id="GO:0016605">
    <property type="term" value="C:PML body"/>
    <property type="evidence" value="ECO:0000314"/>
    <property type="project" value="MGI"/>
</dbReference>
<dbReference type="GO" id="GO:0090734">
    <property type="term" value="C:site of DNA damage"/>
    <property type="evidence" value="ECO:0000315"/>
    <property type="project" value="UniProtKB"/>
</dbReference>
<dbReference type="GO" id="GO:0035861">
    <property type="term" value="C:site of double-strand break"/>
    <property type="evidence" value="ECO:0000314"/>
    <property type="project" value="UniProt"/>
</dbReference>
<dbReference type="GO" id="GO:0003682">
    <property type="term" value="F:chromatin binding"/>
    <property type="evidence" value="ECO:0007669"/>
    <property type="project" value="Ensembl"/>
</dbReference>
<dbReference type="GO" id="GO:0140463">
    <property type="term" value="F:chromatin-protein adaptor activity"/>
    <property type="evidence" value="ECO:0000314"/>
    <property type="project" value="UniProt"/>
</dbReference>
<dbReference type="GO" id="GO:0003684">
    <property type="term" value="F:damaged DNA binding"/>
    <property type="evidence" value="ECO:0000314"/>
    <property type="project" value="UniProtKB"/>
</dbReference>
<dbReference type="GO" id="GO:0098505">
    <property type="term" value="F:G-rich strand telomeric DNA binding"/>
    <property type="evidence" value="ECO:0000314"/>
    <property type="project" value="BHF-UCL"/>
</dbReference>
<dbReference type="GO" id="GO:0003697">
    <property type="term" value="F:single-stranded DNA binding"/>
    <property type="evidence" value="ECO:0000314"/>
    <property type="project" value="UniProtKB"/>
</dbReference>
<dbReference type="GO" id="GO:0043047">
    <property type="term" value="F:single-stranded telomeric DNA binding"/>
    <property type="evidence" value="ECO:0000318"/>
    <property type="project" value="GO_Central"/>
</dbReference>
<dbReference type="GO" id="GO:0008270">
    <property type="term" value="F:zinc ion binding"/>
    <property type="evidence" value="ECO:0007669"/>
    <property type="project" value="UniProtKB-KW"/>
</dbReference>
<dbReference type="GO" id="GO:0006284">
    <property type="term" value="P:base-excision repair"/>
    <property type="evidence" value="ECO:0000314"/>
    <property type="project" value="UniProtKB"/>
</dbReference>
<dbReference type="GO" id="GO:0006974">
    <property type="term" value="P:DNA damage response"/>
    <property type="evidence" value="ECO:0000315"/>
    <property type="project" value="UniProtKB"/>
</dbReference>
<dbReference type="GO" id="GO:0006310">
    <property type="term" value="P:DNA recombination"/>
    <property type="evidence" value="ECO:0000304"/>
    <property type="project" value="ProtInc"/>
</dbReference>
<dbReference type="GO" id="GO:0006281">
    <property type="term" value="P:DNA repair"/>
    <property type="evidence" value="ECO:0000314"/>
    <property type="project" value="ComplexPortal"/>
</dbReference>
<dbReference type="GO" id="GO:0006260">
    <property type="term" value="P:DNA replication"/>
    <property type="evidence" value="ECO:0000315"/>
    <property type="project" value="UniProtKB"/>
</dbReference>
<dbReference type="GO" id="GO:0006261">
    <property type="term" value="P:DNA-templated DNA replication"/>
    <property type="evidence" value="ECO:0000304"/>
    <property type="project" value="ProtInc"/>
</dbReference>
<dbReference type="GO" id="GO:0000724">
    <property type="term" value="P:double-strand break repair via homologous recombination"/>
    <property type="evidence" value="ECO:0000315"/>
    <property type="project" value="UniProtKB"/>
</dbReference>
<dbReference type="GO" id="GO:0030097">
    <property type="term" value="P:hemopoiesis"/>
    <property type="evidence" value="ECO:0007669"/>
    <property type="project" value="Ensembl"/>
</dbReference>
<dbReference type="GO" id="GO:0048873">
    <property type="term" value="P:homeostasis of number of cells within a tissue"/>
    <property type="evidence" value="ECO:0007669"/>
    <property type="project" value="Ensembl"/>
</dbReference>
<dbReference type="GO" id="GO:0001701">
    <property type="term" value="P:in utero embryonic development"/>
    <property type="evidence" value="ECO:0007669"/>
    <property type="project" value="Ensembl"/>
</dbReference>
<dbReference type="GO" id="GO:0051321">
    <property type="term" value="P:meiotic cell cycle"/>
    <property type="evidence" value="ECO:0000318"/>
    <property type="project" value="GO_Central"/>
</dbReference>
<dbReference type="GO" id="GO:0006298">
    <property type="term" value="P:mismatch repair"/>
    <property type="evidence" value="ECO:0000315"/>
    <property type="project" value="UniProtKB"/>
</dbReference>
<dbReference type="GO" id="GO:0006289">
    <property type="term" value="P:nucleotide-excision repair"/>
    <property type="evidence" value="ECO:0000315"/>
    <property type="project" value="UniProtKB"/>
</dbReference>
<dbReference type="GO" id="GO:0008284">
    <property type="term" value="P:positive regulation of cell population proliferation"/>
    <property type="evidence" value="ECO:0007669"/>
    <property type="project" value="Ensembl"/>
</dbReference>
<dbReference type="GO" id="GO:0034502">
    <property type="term" value="P:protein localization to chromosome"/>
    <property type="evidence" value="ECO:0000314"/>
    <property type="project" value="UniProtKB"/>
</dbReference>
<dbReference type="GO" id="GO:1990166">
    <property type="term" value="P:protein localization to site of double-strand break"/>
    <property type="evidence" value="ECO:0000314"/>
    <property type="project" value="UniProt"/>
</dbReference>
<dbReference type="GO" id="GO:0000723">
    <property type="term" value="P:telomere maintenance"/>
    <property type="evidence" value="ECO:0000315"/>
    <property type="project" value="UniProtKB"/>
</dbReference>
<dbReference type="GO" id="GO:0007004">
    <property type="term" value="P:telomere maintenance via telomerase"/>
    <property type="evidence" value="ECO:0000318"/>
    <property type="project" value="GO_Central"/>
</dbReference>
<dbReference type="CDD" id="cd04474">
    <property type="entry name" value="RPA1_DBD_A"/>
    <property type="match status" value="1"/>
</dbReference>
<dbReference type="CDD" id="cd04475">
    <property type="entry name" value="RPA1_DBD_B"/>
    <property type="match status" value="1"/>
</dbReference>
<dbReference type="CDD" id="cd04476">
    <property type="entry name" value="RPA1_DBD_C"/>
    <property type="match status" value="1"/>
</dbReference>
<dbReference type="CDD" id="cd04477">
    <property type="entry name" value="RPA1N"/>
    <property type="match status" value="1"/>
</dbReference>
<dbReference type="FunFam" id="2.40.50.140:FF:000041">
    <property type="entry name" value="Replication protein A subunit"/>
    <property type="match status" value="1"/>
</dbReference>
<dbReference type="FunFam" id="2.40.50.140:FF:000064">
    <property type="entry name" value="Replication protein A subunit"/>
    <property type="match status" value="1"/>
</dbReference>
<dbReference type="FunFam" id="2.40.50.140:FF:000090">
    <property type="entry name" value="Replication protein A subunit"/>
    <property type="match status" value="1"/>
</dbReference>
<dbReference type="FunFam" id="2.40.50.140:FF:000117">
    <property type="entry name" value="Replication protein A subunit"/>
    <property type="match status" value="1"/>
</dbReference>
<dbReference type="Gene3D" id="2.40.50.140">
    <property type="entry name" value="Nucleic acid-binding proteins"/>
    <property type="match status" value="4"/>
</dbReference>
<dbReference type="IDEAL" id="IID00036"/>
<dbReference type="InterPro" id="IPR047192">
    <property type="entry name" value="Euk_RPA1_DBD_C"/>
</dbReference>
<dbReference type="InterPro" id="IPR012340">
    <property type="entry name" value="NA-bd_OB-fold"/>
</dbReference>
<dbReference type="InterPro" id="IPR004365">
    <property type="entry name" value="NA-bd_OB_tRNA"/>
</dbReference>
<dbReference type="InterPro" id="IPR013955">
    <property type="entry name" value="Rep_factor-A_C"/>
</dbReference>
<dbReference type="InterPro" id="IPR007199">
    <property type="entry name" value="Rep_factor-A_N"/>
</dbReference>
<dbReference type="InterPro" id="IPR031657">
    <property type="entry name" value="REPA_OB_2"/>
</dbReference>
<dbReference type="InterPro" id="IPR004591">
    <property type="entry name" value="Rfa1"/>
</dbReference>
<dbReference type="NCBIfam" id="TIGR00617">
    <property type="entry name" value="rpa1"/>
    <property type="match status" value="1"/>
</dbReference>
<dbReference type="PANTHER" id="PTHR47165">
    <property type="entry name" value="OS03G0429900 PROTEIN"/>
    <property type="match status" value="1"/>
</dbReference>
<dbReference type="PANTHER" id="PTHR47165:SF4">
    <property type="entry name" value="OS03G0429900 PROTEIN"/>
    <property type="match status" value="1"/>
</dbReference>
<dbReference type="Pfam" id="PF04057">
    <property type="entry name" value="Rep-A_N"/>
    <property type="match status" value="1"/>
</dbReference>
<dbReference type="Pfam" id="PF08646">
    <property type="entry name" value="Rep_fac-A_C"/>
    <property type="match status" value="1"/>
</dbReference>
<dbReference type="Pfam" id="PF16900">
    <property type="entry name" value="REPA_OB_2"/>
    <property type="match status" value="1"/>
</dbReference>
<dbReference type="Pfam" id="PF01336">
    <property type="entry name" value="tRNA_anti-codon"/>
    <property type="match status" value="1"/>
</dbReference>
<dbReference type="SUPFAM" id="SSF50249">
    <property type="entry name" value="Nucleic acid-binding proteins"/>
    <property type="match status" value="4"/>
</dbReference>
<gene>
    <name type="primary">RPA1</name>
    <name type="synonym">REPA1</name>
    <name type="synonym">RPA70</name>
</gene>
<sequence length="616" mass="68138">MVGQLSEGAIAAIMQKGDTNIKPILQVINIRPITTGNSPPRYRLLMSDGLNTLSSFMLATQLNPLVEEEQLSSNCVCQIHRFIVNTLKDGRRVVILMELEVLKSAEAVGVKIGNPVPYNEGLGQPQVAPPAPAASPAASSRPQPQNGSSGMGSTVSKAYGASKTFGKAAGPSLSHTSGGTQSKVVPIASLTPYQSKWTICARVTNKSQIRTWSNSRGEGKLFSLELVDESGEIRATAFNEQVDKFFPLIEVNKVYYFSKGTLKIANKQFTAVKNDYEMTFNNETSVMPCEDDHHLPTVQFDFTGIDDLENKSKDSLVDIIGICKSYEDATKITVRSNNREVAKRNIYLMDTSGKVVTATLWGEDADKFDGSRQPVLAIKGARVSDFGGRSLSVLSSSTIIANPDIPEAYKLRGWFDAEGQALDGVSISDLKSGGVGGSNTNWKTLYEVKSENLGQGDKPDYFSSVATVVYLRKENCMYQACPTQDCNKKVIDQQNGLYRCEKCDTEFPNFKYRMILSVNIADFQENQWVTCFQESAEAILGQNAAYLGELKDKNEQAFEEVFQNANFRSFIFRVRVKVETYNDESRIKATVMDVKPVDYREYGRRLVMSIRRSALM</sequence>